<dbReference type="EC" id="1.5.1.53" evidence="13 15"/>
<dbReference type="EMBL" id="U09806">
    <property type="protein sequence ID" value="AAA74440.2"/>
    <property type="molecule type" value="mRNA"/>
</dbReference>
<dbReference type="EMBL" id="AF105987">
    <property type="protein sequence ID" value="AAD17965.1"/>
    <property type="molecule type" value="Genomic_DNA"/>
</dbReference>
<dbReference type="EMBL" id="AF105977">
    <property type="protein sequence ID" value="AAD17965.1"/>
    <property type="status" value="JOINED"/>
    <property type="molecule type" value="Genomic_DNA"/>
</dbReference>
<dbReference type="EMBL" id="AF105978">
    <property type="protein sequence ID" value="AAD17965.1"/>
    <property type="status" value="JOINED"/>
    <property type="molecule type" value="Genomic_DNA"/>
</dbReference>
<dbReference type="EMBL" id="AF105979">
    <property type="protein sequence ID" value="AAD17965.1"/>
    <property type="status" value="JOINED"/>
    <property type="molecule type" value="Genomic_DNA"/>
</dbReference>
<dbReference type="EMBL" id="AF105980">
    <property type="protein sequence ID" value="AAD17965.1"/>
    <property type="status" value="JOINED"/>
    <property type="molecule type" value="Genomic_DNA"/>
</dbReference>
<dbReference type="EMBL" id="AF105981">
    <property type="protein sequence ID" value="AAD17965.1"/>
    <property type="status" value="JOINED"/>
    <property type="molecule type" value="Genomic_DNA"/>
</dbReference>
<dbReference type="EMBL" id="AF105982">
    <property type="protein sequence ID" value="AAD17965.1"/>
    <property type="status" value="JOINED"/>
    <property type="molecule type" value="Genomic_DNA"/>
</dbReference>
<dbReference type="EMBL" id="AF105983">
    <property type="protein sequence ID" value="AAD17965.1"/>
    <property type="status" value="JOINED"/>
    <property type="molecule type" value="Genomic_DNA"/>
</dbReference>
<dbReference type="EMBL" id="AF105984">
    <property type="protein sequence ID" value="AAD17965.1"/>
    <property type="status" value="JOINED"/>
    <property type="molecule type" value="Genomic_DNA"/>
</dbReference>
<dbReference type="EMBL" id="AF105985">
    <property type="protein sequence ID" value="AAD17965.1"/>
    <property type="status" value="JOINED"/>
    <property type="molecule type" value="Genomic_DNA"/>
</dbReference>
<dbReference type="EMBL" id="AF105986">
    <property type="protein sequence ID" value="AAD17965.1"/>
    <property type="status" value="JOINED"/>
    <property type="molecule type" value="Genomic_DNA"/>
</dbReference>
<dbReference type="EMBL" id="AJ237672">
    <property type="protein sequence ID" value="CAB41971.1"/>
    <property type="molecule type" value="mRNA"/>
</dbReference>
<dbReference type="EMBL" id="AK312907">
    <property type="protein sequence ID" value="BAG35753.1"/>
    <property type="molecule type" value="mRNA"/>
</dbReference>
<dbReference type="EMBL" id="AY338232">
    <property type="protein sequence ID" value="AAP88033.1"/>
    <property type="molecule type" value="Genomic_DNA"/>
</dbReference>
<dbReference type="EMBL" id="AL953897">
    <property type="status" value="NOT_ANNOTATED_CDS"/>
    <property type="molecule type" value="Genomic_DNA"/>
</dbReference>
<dbReference type="EMBL" id="CH471130">
    <property type="protein sequence ID" value="EAW71709.1"/>
    <property type="molecule type" value="Genomic_DNA"/>
</dbReference>
<dbReference type="EMBL" id="BC053509">
    <property type="protein sequence ID" value="AAH53509.1"/>
    <property type="molecule type" value="mRNA"/>
</dbReference>
<dbReference type="EMBL" id="AY046562">
    <property type="protein sequence ID" value="AAL17648.1"/>
    <property type="molecule type" value="mRNA"/>
</dbReference>
<dbReference type="EMBL" id="AF398930">
    <property type="protein sequence ID" value="AAN40865.1"/>
    <property type="molecule type" value="Genomic_DNA"/>
</dbReference>
<dbReference type="CCDS" id="CCDS137.1">
    <molecule id="P42898-1"/>
</dbReference>
<dbReference type="CCDS" id="CCDS81262.1">
    <molecule id="P42898-2"/>
</dbReference>
<dbReference type="PIR" id="S46454">
    <property type="entry name" value="S46454"/>
</dbReference>
<dbReference type="RefSeq" id="NP_001317287.1">
    <molecule id="P42898-2"/>
    <property type="nucleotide sequence ID" value="NM_001330358.2"/>
</dbReference>
<dbReference type="RefSeq" id="NP_005948.3">
    <molecule id="P42898-1"/>
    <property type="nucleotide sequence ID" value="NM_005957.4"/>
</dbReference>
<dbReference type="RefSeq" id="XP_005263517.1">
    <property type="nucleotide sequence ID" value="XM_005263460.4"/>
</dbReference>
<dbReference type="RefSeq" id="XP_005263519.1">
    <molecule id="P42898-1"/>
    <property type="nucleotide sequence ID" value="XM_005263462.5"/>
</dbReference>
<dbReference type="RefSeq" id="XP_047277134.1">
    <molecule id="P42898-1"/>
    <property type="nucleotide sequence ID" value="XM_047421178.1"/>
</dbReference>
<dbReference type="PDB" id="6FCX">
    <property type="method" value="X-ray"/>
    <property type="resolution" value="2.50 A"/>
    <property type="chains" value="A/B=37-644"/>
</dbReference>
<dbReference type="PDB" id="8QA4">
    <property type="method" value="EM"/>
    <property type="resolution" value="2.80 A"/>
    <property type="chains" value="A/B=1-656"/>
</dbReference>
<dbReference type="PDB" id="8QA5">
    <property type="method" value="EM"/>
    <property type="resolution" value="3.14 A"/>
    <property type="chains" value="A/B=1-656"/>
</dbReference>
<dbReference type="PDB" id="8QA6">
    <property type="method" value="EM"/>
    <property type="resolution" value="2.91 A"/>
    <property type="chains" value="A/B=1-656"/>
</dbReference>
<dbReference type="PDBsum" id="6FCX"/>
<dbReference type="PDBsum" id="8QA4"/>
<dbReference type="PDBsum" id="8QA5"/>
<dbReference type="PDBsum" id="8QA6"/>
<dbReference type="EMDB" id="EMD-18298"/>
<dbReference type="EMDB" id="EMD-18299"/>
<dbReference type="EMDB" id="EMD-18300"/>
<dbReference type="SMR" id="P42898"/>
<dbReference type="BioGRID" id="110624">
    <property type="interactions" value="47"/>
</dbReference>
<dbReference type="FunCoup" id="P42898">
    <property type="interactions" value="758"/>
</dbReference>
<dbReference type="IntAct" id="P42898">
    <property type="interactions" value="37"/>
</dbReference>
<dbReference type="MINT" id="P42898"/>
<dbReference type="STRING" id="9606.ENSP00000365770"/>
<dbReference type="DrugBank" id="DB00542">
    <property type="generic name" value="Benazepril"/>
</dbReference>
<dbReference type="DrugBank" id="DB00115">
    <property type="generic name" value="Cyanocobalamin"/>
</dbReference>
<dbReference type="DrugBank" id="DB00544">
    <property type="generic name" value="Fluorouracil"/>
</dbReference>
<dbReference type="DrugBank" id="DB00158">
    <property type="generic name" value="Folic acid"/>
</dbReference>
<dbReference type="DrugBank" id="DB00170">
    <property type="generic name" value="Menadione"/>
</dbReference>
<dbReference type="DrugBank" id="DB00134">
    <property type="generic name" value="Methionine"/>
</dbReference>
<dbReference type="DrugBank" id="DB00563">
    <property type="generic name" value="Methotrexate"/>
</dbReference>
<dbReference type="DrugBank" id="DB00140">
    <property type="generic name" value="Riboflavin"/>
</dbReference>
<dbReference type="DrugBank" id="DB00116">
    <property type="generic name" value="Tetrahydrofolic acid"/>
</dbReference>
<dbReference type="GlyGen" id="P42898">
    <property type="glycosylation" value="1 site"/>
</dbReference>
<dbReference type="iPTMnet" id="P42898"/>
<dbReference type="PhosphoSitePlus" id="P42898"/>
<dbReference type="BioMuta" id="MTHFR"/>
<dbReference type="DMDM" id="56405339"/>
<dbReference type="jPOST" id="P42898"/>
<dbReference type="MassIVE" id="P42898"/>
<dbReference type="PaxDb" id="9606-ENSP00000365777"/>
<dbReference type="PeptideAtlas" id="P42898"/>
<dbReference type="ProteomicsDB" id="55566">
    <molecule id="P42898-1"/>
</dbReference>
<dbReference type="Pumba" id="P42898"/>
<dbReference type="Antibodypedia" id="28242">
    <property type="antibodies" value="415 antibodies from 38 providers"/>
</dbReference>
<dbReference type="DNASU" id="4524"/>
<dbReference type="Ensembl" id="ENST00000376583.7">
    <molecule id="P42898-2"/>
    <property type="protein sequence ID" value="ENSP00000365767.3"/>
    <property type="gene ID" value="ENSG00000177000.13"/>
</dbReference>
<dbReference type="Ensembl" id="ENST00000376585.6">
    <molecule id="P42898-2"/>
    <property type="protein sequence ID" value="ENSP00000365770.1"/>
    <property type="gene ID" value="ENSG00000177000.13"/>
</dbReference>
<dbReference type="Ensembl" id="ENST00000376590.9">
    <molecule id="P42898-1"/>
    <property type="protein sequence ID" value="ENSP00000365775.3"/>
    <property type="gene ID" value="ENSG00000177000.13"/>
</dbReference>
<dbReference type="Ensembl" id="ENST00000376592.6">
    <molecule id="P42898-1"/>
    <property type="protein sequence ID" value="ENSP00000365777.1"/>
    <property type="gene ID" value="ENSG00000177000.13"/>
</dbReference>
<dbReference type="GeneID" id="4524"/>
<dbReference type="KEGG" id="hsa:4524"/>
<dbReference type="MANE-Select" id="ENST00000376590.9">
    <property type="protein sequence ID" value="ENSP00000365775.3"/>
    <property type="RefSeq nucleotide sequence ID" value="NM_005957.5"/>
    <property type="RefSeq protein sequence ID" value="NP_005948.3"/>
</dbReference>
<dbReference type="UCSC" id="uc001atc.3">
    <molecule id="P42898-1"/>
    <property type="organism name" value="human"/>
</dbReference>
<dbReference type="AGR" id="HGNC:7436"/>
<dbReference type="CTD" id="4524"/>
<dbReference type="DisGeNET" id="4524"/>
<dbReference type="GeneCards" id="MTHFR"/>
<dbReference type="HGNC" id="HGNC:7436">
    <property type="gene designation" value="MTHFR"/>
</dbReference>
<dbReference type="HPA" id="ENSG00000177000">
    <property type="expression patterns" value="Low tissue specificity"/>
</dbReference>
<dbReference type="MalaCards" id="MTHFR"/>
<dbReference type="MIM" id="181500">
    <property type="type" value="phenotype"/>
</dbReference>
<dbReference type="MIM" id="236250">
    <property type="type" value="phenotype"/>
</dbReference>
<dbReference type="MIM" id="601367">
    <property type="type" value="phenotype"/>
</dbReference>
<dbReference type="MIM" id="601634">
    <property type="type" value="phenotype"/>
</dbReference>
<dbReference type="MIM" id="603174">
    <property type="type" value="phenotype"/>
</dbReference>
<dbReference type="MIM" id="607093">
    <property type="type" value="gene"/>
</dbReference>
<dbReference type="neXtProt" id="NX_P42898"/>
<dbReference type="OpenTargets" id="ENSG00000177000"/>
<dbReference type="Orphanet" id="395">
    <property type="disease" value="Homocystinuria due to methylene tetrahydrofolate reductase deficiency"/>
</dbReference>
<dbReference type="Orphanet" id="563609">
    <property type="disease" value="Isolated anencephaly"/>
</dbReference>
<dbReference type="Orphanet" id="563612">
    <property type="disease" value="Isolated exencephaly"/>
</dbReference>
<dbReference type="PharmGKB" id="PA245"/>
<dbReference type="VEuPathDB" id="HostDB:ENSG00000177000"/>
<dbReference type="eggNOG" id="KOG0564">
    <property type="taxonomic scope" value="Eukaryota"/>
</dbReference>
<dbReference type="GeneTree" id="ENSGT00390000012490"/>
<dbReference type="HOGENOM" id="CLU_025841_2_0_1"/>
<dbReference type="InParanoid" id="P42898"/>
<dbReference type="OMA" id="AWKEEFY"/>
<dbReference type="OrthoDB" id="16284at2759"/>
<dbReference type="PAN-GO" id="P42898">
    <property type="GO annotations" value="5 GO annotations based on evolutionary models"/>
</dbReference>
<dbReference type="PhylomeDB" id="P42898"/>
<dbReference type="TreeFam" id="TF105665"/>
<dbReference type="BioCyc" id="MetaCyc:HS11117-MONOMER"/>
<dbReference type="BRENDA" id="1.5.1.20">
    <property type="organism ID" value="2681"/>
</dbReference>
<dbReference type="BRENDA" id="1.5.1.53">
    <property type="organism ID" value="2681"/>
</dbReference>
<dbReference type="PathwayCommons" id="P42898"/>
<dbReference type="Reactome" id="R-HSA-196757">
    <property type="pathway name" value="Metabolism of folate and pterines"/>
</dbReference>
<dbReference type="SABIO-RK" id="P42898"/>
<dbReference type="SignaLink" id="P42898"/>
<dbReference type="SIGNOR" id="P42898"/>
<dbReference type="UniPathway" id="UPA00193"/>
<dbReference type="BioGRID-ORCS" id="4524">
    <property type="hits" value="12 hits in 1154 CRISPR screens"/>
</dbReference>
<dbReference type="ChiTaRS" id="MTHFR">
    <property type="organism name" value="human"/>
</dbReference>
<dbReference type="GeneWiki" id="Methylenetetrahydrofolate_reductase"/>
<dbReference type="GenomeRNAi" id="4524"/>
<dbReference type="Pharos" id="P42898">
    <property type="development level" value="Tbio"/>
</dbReference>
<dbReference type="PRO" id="PR:P42898"/>
<dbReference type="Proteomes" id="UP000005640">
    <property type="component" value="Chromosome 1"/>
</dbReference>
<dbReference type="RNAct" id="P42898">
    <property type="molecule type" value="protein"/>
</dbReference>
<dbReference type="Bgee" id="ENSG00000177000">
    <property type="expression patterns" value="Expressed in corpus epididymis and 177 other cell types or tissues"/>
</dbReference>
<dbReference type="ExpressionAtlas" id="P42898">
    <property type="expression patterns" value="baseline and differential"/>
</dbReference>
<dbReference type="GO" id="GO:0005829">
    <property type="term" value="C:cytosol"/>
    <property type="evidence" value="ECO:0000304"/>
    <property type="project" value="Reactome"/>
</dbReference>
<dbReference type="GO" id="GO:0071949">
    <property type="term" value="F:FAD binding"/>
    <property type="evidence" value="ECO:0000318"/>
    <property type="project" value="GO_Central"/>
</dbReference>
<dbReference type="GO" id="GO:0050660">
    <property type="term" value="F:flavin adenine dinucleotide binding"/>
    <property type="evidence" value="ECO:0000314"/>
    <property type="project" value="BHF-UCL"/>
</dbReference>
<dbReference type="GO" id="GO:0004489">
    <property type="term" value="F:methylenetetrahydrofolate reductase (NAD(P)H) activity"/>
    <property type="evidence" value="ECO:0000314"/>
    <property type="project" value="UniProtKB"/>
</dbReference>
<dbReference type="GO" id="GO:0106313">
    <property type="term" value="F:methylenetetrahydrofolate reductase (NADPH) activity"/>
    <property type="evidence" value="ECO:0007669"/>
    <property type="project" value="RHEA"/>
</dbReference>
<dbReference type="GO" id="GO:0072341">
    <property type="term" value="F:modified amino acid binding"/>
    <property type="evidence" value="ECO:0000314"/>
    <property type="project" value="UniProtKB"/>
</dbReference>
<dbReference type="GO" id="GO:0050661">
    <property type="term" value="F:NADP binding"/>
    <property type="evidence" value="ECO:0007669"/>
    <property type="project" value="Ensembl"/>
</dbReference>
<dbReference type="GO" id="GO:0044877">
    <property type="term" value="F:protein-containing complex binding"/>
    <property type="evidence" value="ECO:0000353"/>
    <property type="project" value="BHF-UCL"/>
</dbReference>
<dbReference type="GO" id="GO:0070828">
    <property type="term" value="P:heterochromatin organization"/>
    <property type="evidence" value="ECO:0000314"/>
    <property type="project" value="BHF-UCL"/>
</dbReference>
<dbReference type="GO" id="GO:0050667">
    <property type="term" value="P:homocysteine metabolic process"/>
    <property type="evidence" value="ECO:0000314"/>
    <property type="project" value="UniProtKB"/>
</dbReference>
<dbReference type="GO" id="GO:0009086">
    <property type="term" value="P:methionine biosynthetic process"/>
    <property type="evidence" value="ECO:0000318"/>
    <property type="project" value="GO_Central"/>
</dbReference>
<dbReference type="GO" id="GO:0006555">
    <property type="term" value="P:methionine metabolic process"/>
    <property type="evidence" value="ECO:0000316"/>
    <property type="project" value="BHF-UCL"/>
</dbReference>
<dbReference type="GO" id="GO:0001843">
    <property type="term" value="P:neural tube closure"/>
    <property type="evidence" value="ECO:0000315"/>
    <property type="project" value="BHF-UCL"/>
</dbReference>
<dbReference type="GO" id="GO:0043200">
    <property type="term" value="P:response to amino acid"/>
    <property type="evidence" value="ECO:0007669"/>
    <property type="project" value="Ensembl"/>
</dbReference>
<dbReference type="GO" id="GO:0051593">
    <property type="term" value="P:response to folic acid"/>
    <property type="evidence" value="ECO:0007669"/>
    <property type="project" value="Ensembl"/>
</dbReference>
<dbReference type="GO" id="GO:0001666">
    <property type="term" value="P:response to hypoxia"/>
    <property type="evidence" value="ECO:0007669"/>
    <property type="project" value="Ensembl"/>
</dbReference>
<dbReference type="GO" id="GO:0070555">
    <property type="term" value="P:response to interleukin-1"/>
    <property type="evidence" value="ECO:0007669"/>
    <property type="project" value="Ensembl"/>
</dbReference>
<dbReference type="GO" id="GO:0033274">
    <property type="term" value="P:response to vitamin B2"/>
    <property type="evidence" value="ECO:0007669"/>
    <property type="project" value="Ensembl"/>
</dbReference>
<dbReference type="GO" id="GO:0009410">
    <property type="term" value="P:response to xenobiotic stimulus"/>
    <property type="evidence" value="ECO:0007669"/>
    <property type="project" value="Ensembl"/>
</dbReference>
<dbReference type="GO" id="GO:0046500">
    <property type="term" value="P:S-adenosylmethionine metabolic process"/>
    <property type="evidence" value="ECO:0007669"/>
    <property type="project" value="Ensembl"/>
</dbReference>
<dbReference type="GO" id="GO:0035999">
    <property type="term" value="P:tetrahydrofolate interconversion"/>
    <property type="evidence" value="ECO:0000314"/>
    <property type="project" value="UniProtKB"/>
</dbReference>
<dbReference type="CDD" id="cd00537">
    <property type="entry name" value="MTHFR"/>
    <property type="match status" value="1"/>
</dbReference>
<dbReference type="FunFam" id="3.20.20.220:FF:000003">
    <property type="entry name" value="Methylenetetrahydrofolate reductase"/>
    <property type="match status" value="1"/>
</dbReference>
<dbReference type="Gene3D" id="3.20.20.220">
    <property type="match status" value="1"/>
</dbReference>
<dbReference type="InterPro" id="IPR029041">
    <property type="entry name" value="FAD-linked_oxidoreductase-like"/>
</dbReference>
<dbReference type="InterPro" id="IPR004621">
    <property type="entry name" value="Fadh2_euk"/>
</dbReference>
<dbReference type="InterPro" id="IPR003171">
    <property type="entry name" value="Mehydrof_redctse-like"/>
</dbReference>
<dbReference type="InterPro" id="IPR053806">
    <property type="entry name" value="MTHFR_C"/>
</dbReference>
<dbReference type="NCBIfam" id="TIGR00677">
    <property type="entry name" value="fadh2_euk"/>
    <property type="match status" value="1"/>
</dbReference>
<dbReference type="PANTHER" id="PTHR45754">
    <property type="entry name" value="METHYLENETETRAHYDROFOLATE REDUCTASE"/>
    <property type="match status" value="1"/>
</dbReference>
<dbReference type="PANTHER" id="PTHR45754:SF3">
    <property type="entry name" value="METHYLENETETRAHYDROFOLATE REDUCTASE (NADPH)"/>
    <property type="match status" value="1"/>
</dbReference>
<dbReference type="Pfam" id="PF02219">
    <property type="entry name" value="MTHFR"/>
    <property type="match status" value="1"/>
</dbReference>
<dbReference type="Pfam" id="PF21895">
    <property type="entry name" value="MTHFR_C"/>
    <property type="match status" value="1"/>
</dbReference>
<dbReference type="SUPFAM" id="SSF51730">
    <property type="entry name" value="FAD-linked oxidoreductase"/>
    <property type="match status" value="1"/>
</dbReference>
<accession>P42898</accession>
<accession>B2R7A6</accession>
<accession>Q5SNW6</accession>
<accession>Q5SNW9</accession>
<accession>Q7Z6M6</accession>
<accession>Q8IU73</accession>
<accession>Q9UQR2</accession>
<reference key="1">
    <citation type="patent" date="1995-12-07" number="WO9533054">
        <title>cDNA for human methylenetetrahydrofolate reductase.</title>
        <authorList>
            <person name="Rozen R."/>
            <person name="Goyette P."/>
        </authorList>
    </citation>
    <scope>NUCLEOTIDE SEQUENCE [MRNA] (ISOFORM 1)</scope>
</reference>
<reference key="2">
    <citation type="journal article" date="1998" name="Mamm. Genome">
        <title>Gene structure of human and mouse methylenetetrahydrofolate reductase (MTHFR).</title>
        <authorList>
            <person name="Goyette P."/>
            <person name="Pai A."/>
            <person name="Milos R."/>
            <person name="Frosst P."/>
            <person name="Tran P."/>
            <person name="Chen Z."/>
            <person name="Chan M."/>
            <person name="Rozen R."/>
        </authorList>
    </citation>
    <scope>NUCLEOTIDE SEQUENCE [GENOMIC DNA]</scope>
</reference>
<reference key="3">
    <citation type="submission" date="1999-03" db="EMBL/GenBank/DDBJ databases">
        <title>Revised translation initiation site of the human methylenetetrahydrofolate reductase (MTHFR).</title>
        <authorList>
            <person name="Homberger A."/>
            <person name="Linnebank M."/>
            <person name="Winter C."/>
            <person name="Rapp B."/>
            <person name="Koch H.G."/>
        </authorList>
    </citation>
    <scope>NUCLEOTIDE SEQUENCE [MRNA] (ISOFORM 1)</scope>
</reference>
<reference key="4">
    <citation type="journal article" date="2004" name="Nat. Genet.">
        <title>Complete sequencing and characterization of 21,243 full-length human cDNAs.</title>
        <authorList>
            <person name="Ota T."/>
            <person name="Suzuki Y."/>
            <person name="Nishikawa T."/>
            <person name="Otsuki T."/>
            <person name="Sugiyama T."/>
            <person name="Irie R."/>
            <person name="Wakamatsu A."/>
            <person name="Hayashi K."/>
            <person name="Sato H."/>
            <person name="Nagai K."/>
            <person name="Kimura K."/>
            <person name="Makita H."/>
            <person name="Sekine M."/>
            <person name="Obayashi M."/>
            <person name="Nishi T."/>
            <person name="Shibahara T."/>
            <person name="Tanaka T."/>
            <person name="Ishii S."/>
            <person name="Yamamoto J."/>
            <person name="Saito K."/>
            <person name="Kawai Y."/>
            <person name="Isono Y."/>
            <person name="Nakamura Y."/>
            <person name="Nagahari K."/>
            <person name="Murakami K."/>
            <person name="Yasuda T."/>
            <person name="Iwayanagi T."/>
            <person name="Wagatsuma M."/>
            <person name="Shiratori A."/>
            <person name="Sudo H."/>
            <person name="Hosoiri T."/>
            <person name="Kaku Y."/>
            <person name="Kodaira H."/>
            <person name="Kondo H."/>
            <person name="Sugawara M."/>
            <person name="Takahashi M."/>
            <person name="Kanda K."/>
            <person name="Yokoi T."/>
            <person name="Furuya T."/>
            <person name="Kikkawa E."/>
            <person name="Omura Y."/>
            <person name="Abe K."/>
            <person name="Kamihara K."/>
            <person name="Katsuta N."/>
            <person name="Sato K."/>
            <person name="Tanikawa M."/>
            <person name="Yamazaki M."/>
            <person name="Ninomiya K."/>
            <person name="Ishibashi T."/>
            <person name="Yamashita H."/>
            <person name="Murakawa K."/>
            <person name="Fujimori K."/>
            <person name="Tanai H."/>
            <person name="Kimata M."/>
            <person name="Watanabe M."/>
            <person name="Hiraoka S."/>
            <person name="Chiba Y."/>
            <person name="Ishida S."/>
            <person name="Ono Y."/>
            <person name="Takiguchi S."/>
            <person name="Watanabe S."/>
            <person name="Yosida M."/>
            <person name="Hotuta T."/>
            <person name="Kusano J."/>
            <person name="Kanehori K."/>
            <person name="Takahashi-Fujii A."/>
            <person name="Hara H."/>
            <person name="Tanase T.-O."/>
            <person name="Nomura Y."/>
            <person name="Togiya S."/>
            <person name="Komai F."/>
            <person name="Hara R."/>
            <person name="Takeuchi K."/>
            <person name="Arita M."/>
            <person name="Imose N."/>
            <person name="Musashino K."/>
            <person name="Yuuki H."/>
            <person name="Oshima A."/>
            <person name="Sasaki N."/>
            <person name="Aotsuka S."/>
            <person name="Yoshikawa Y."/>
            <person name="Matsunawa H."/>
            <person name="Ichihara T."/>
            <person name="Shiohata N."/>
            <person name="Sano S."/>
            <person name="Moriya S."/>
            <person name="Momiyama H."/>
            <person name="Satoh N."/>
            <person name="Takami S."/>
            <person name="Terashima Y."/>
            <person name="Suzuki O."/>
            <person name="Nakagawa S."/>
            <person name="Senoh A."/>
            <person name="Mizoguchi H."/>
            <person name="Goto Y."/>
            <person name="Shimizu F."/>
            <person name="Wakebe H."/>
            <person name="Hishigaki H."/>
            <person name="Watanabe T."/>
            <person name="Sugiyama A."/>
            <person name="Takemoto M."/>
            <person name="Kawakami B."/>
            <person name="Yamazaki M."/>
            <person name="Watanabe K."/>
            <person name="Kumagai A."/>
            <person name="Itakura S."/>
            <person name="Fukuzumi Y."/>
            <person name="Fujimori Y."/>
            <person name="Komiyama M."/>
            <person name="Tashiro H."/>
            <person name="Tanigami A."/>
            <person name="Fujiwara T."/>
            <person name="Ono T."/>
            <person name="Yamada K."/>
            <person name="Fujii Y."/>
            <person name="Ozaki K."/>
            <person name="Hirao M."/>
            <person name="Ohmori Y."/>
            <person name="Kawabata A."/>
            <person name="Hikiji T."/>
            <person name="Kobatake N."/>
            <person name="Inagaki H."/>
            <person name="Ikema Y."/>
            <person name="Okamoto S."/>
            <person name="Okitani R."/>
            <person name="Kawakami T."/>
            <person name="Noguchi S."/>
            <person name="Itoh T."/>
            <person name="Shigeta K."/>
            <person name="Senba T."/>
            <person name="Matsumura K."/>
            <person name="Nakajima Y."/>
            <person name="Mizuno T."/>
            <person name="Morinaga M."/>
            <person name="Sasaki M."/>
            <person name="Togashi T."/>
            <person name="Oyama M."/>
            <person name="Hata H."/>
            <person name="Watanabe M."/>
            <person name="Komatsu T."/>
            <person name="Mizushima-Sugano J."/>
            <person name="Satoh T."/>
            <person name="Shirai Y."/>
            <person name="Takahashi Y."/>
            <person name="Nakagawa K."/>
            <person name="Okumura K."/>
            <person name="Nagase T."/>
            <person name="Nomura N."/>
            <person name="Kikuchi H."/>
            <person name="Masuho Y."/>
            <person name="Yamashita R."/>
            <person name="Nakai K."/>
            <person name="Yada T."/>
            <person name="Nakamura Y."/>
            <person name="Ohara O."/>
            <person name="Isogai T."/>
            <person name="Sugano S."/>
        </authorList>
    </citation>
    <scope>NUCLEOTIDE SEQUENCE [LARGE SCALE MRNA] (ISOFORM 1)</scope>
    <scope>VARIANT VAL-222</scope>
    <source>
        <tissue>Subthalamic nucleus</tissue>
    </source>
</reference>
<reference key="5">
    <citation type="submission" date="2003-07" db="EMBL/GenBank/DDBJ databases">
        <authorList>
            <consortium name="NIEHS SNPs program"/>
        </authorList>
    </citation>
    <scope>NUCLEOTIDE SEQUENCE [GENOMIC DNA]</scope>
    <scope>VARIANTS GLN-68; VAL-222; ARG-422; ALA-429; CYS-519; GLN-594 AND MET-653</scope>
</reference>
<reference key="6">
    <citation type="journal article" date="2006" name="Nature">
        <title>The DNA sequence and biological annotation of human chromosome 1.</title>
        <authorList>
            <person name="Gregory S.G."/>
            <person name="Barlow K.F."/>
            <person name="McLay K.E."/>
            <person name="Kaul R."/>
            <person name="Swarbreck D."/>
            <person name="Dunham A."/>
            <person name="Scott C.E."/>
            <person name="Howe K.L."/>
            <person name="Woodfine K."/>
            <person name="Spencer C.C.A."/>
            <person name="Jones M.C."/>
            <person name="Gillson C."/>
            <person name="Searle S."/>
            <person name="Zhou Y."/>
            <person name="Kokocinski F."/>
            <person name="McDonald L."/>
            <person name="Evans R."/>
            <person name="Phillips K."/>
            <person name="Atkinson A."/>
            <person name="Cooper R."/>
            <person name="Jones C."/>
            <person name="Hall R.E."/>
            <person name="Andrews T.D."/>
            <person name="Lloyd C."/>
            <person name="Ainscough R."/>
            <person name="Almeida J.P."/>
            <person name="Ambrose K.D."/>
            <person name="Anderson F."/>
            <person name="Andrew R.W."/>
            <person name="Ashwell R.I.S."/>
            <person name="Aubin K."/>
            <person name="Babbage A.K."/>
            <person name="Bagguley C.L."/>
            <person name="Bailey J."/>
            <person name="Beasley H."/>
            <person name="Bethel G."/>
            <person name="Bird C.P."/>
            <person name="Bray-Allen S."/>
            <person name="Brown J.Y."/>
            <person name="Brown A.J."/>
            <person name="Buckley D."/>
            <person name="Burton J."/>
            <person name="Bye J."/>
            <person name="Carder C."/>
            <person name="Chapman J.C."/>
            <person name="Clark S.Y."/>
            <person name="Clarke G."/>
            <person name="Clee C."/>
            <person name="Cobley V."/>
            <person name="Collier R.E."/>
            <person name="Corby N."/>
            <person name="Coville G.J."/>
            <person name="Davies J."/>
            <person name="Deadman R."/>
            <person name="Dunn M."/>
            <person name="Earthrowl M."/>
            <person name="Ellington A.G."/>
            <person name="Errington H."/>
            <person name="Frankish A."/>
            <person name="Frankland J."/>
            <person name="French L."/>
            <person name="Garner P."/>
            <person name="Garnett J."/>
            <person name="Gay L."/>
            <person name="Ghori M.R.J."/>
            <person name="Gibson R."/>
            <person name="Gilby L.M."/>
            <person name="Gillett W."/>
            <person name="Glithero R.J."/>
            <person name="Grafham D.V."/>
            <person name="Griffiths C."/>
            <person name="Griffiths-Jones S."/>
            <person name="Grocock R."/>
            <person name="Hammond S."/>
            <person name="Harrison E.S.I."/>
            <person name="Hart E."/>
            <person name="Haugen E."/>
            <person name="Heath P.D."/>
            <person name="Holmes S."/>
            <person name="Holt K."/>
            <person name="Howden P.J."/>
            <person name="Hunt A.R."/>
            <person name="Hunt S.E."/>
            <person name="Hunter G."/>
            <person name="Isherwood J."/>
            <person name="James R."/>
            <person name="Johnson C."/>
            <person name="Johnson D."/>
            <person name="Joy A."/>
            <person name="Kay M."/>
            <person name="Kershaw J.K."/>
            <person name="Kibukawa M."/>
            <person name="Kimberley A.M."/>
            <person name="King A."/>
            <person name="Knights A.J."/>
            <person name="Lad H."/>
            <person name="Laird G."/>
            <person name="Lawlor S."/>
            <person name="Leongamornlert D.A."/>
            <person name="Lloyd D.M."/>
            <person name="Loveland J."/>
            <person name="Lovell J."/>
            <person name="Lush M.J."/>
            <person name="Lyne R."/>
            <person name="Martin S."/>
            <person name="Mashreghi-Mohammadi M."/>
            <person name="Matthews L."/>
            <person name="Matthews N.S.W."/>
            <person name="McLaren S."/>
            <person name="Milne S."/>
            <person name="Mistry S."/>
            <person name="Moore M.J.F."/>
            <person name="Nickerson T."/>
            <person name="O'Dell C.N."/>
            <person name="Oliver K."/>
            <person name="Palmeiri A."/>
            <person name="Palmer S.A."/>
            <person name="Parker A."/>
            <person name="Patel D."/>
            <person name="Pearce A.V."/>
            <person name="Peck A.I."/>
            <person name="Pelan S."/>
            <person name="Phelps K."/>
            <person name="Phillimore B.J."/>
            <person name="Plumb R."/>
            <person name="Rajan J."/>
            <person name="Raymond C."/>
            <person name="Rouse G."/>
            <person name="Saenphimmachak C."/>
            <person name="Sehra H.K."/>
            <person name="Sheridan E."/>
            <person name="Shownkeen R."/>
            <person name="Sims S."/>
            <person name="Skuce C.D."/>
            <person name="Smith M."/>
            <person name="Steward C."/>
            <person name="Subramanian S."/>
            <person name="Sycamore N."/>
            <person name="Tracey A."/>
            <person name="Tromans A."/>
            <person name="Van Helmond Z."/>
            <person name="Wall M."/>
            <person name="Wallis J.M."/>
            <person name="White S."/>
            <person name="Whitehead S.L."/>
            <person name="Wilkinson J.E."/>
            <person name="Willey D.L."/>
            <person name="Williams H."/>
            <person name="Wilming L."/>
            <person name="Wray P.W."/>
            <person name="Wu Z."/>
            <person name="Coulson A."/>
            <person name="Vaudin M."/>
            <person name="Sulston J.E."/>
            <person name="Durbin R.M."/>
            <person name="Hubbard T."/>
            <person name="Wooster R."/>
            <person name="Dunham I."/>
            <person name="Carter N.P."/>
            <person name="McVean G."/>
            <person name="Ross M.T."/>
            <person name="Harrow J."/>
            <person name="Olson M.V."/>
            <person name="Beck S."/>
            <person name="Rogers J."/>
            <person name="Bentley D.R."/>
        </authorList>
    </citation>
    <scope>NUCLEOTIDE SEQUENCE [LARGE SCALE GENOMIC DNA]</scope>
</reference>
<reference key="7">
    <citation type="submission" date="2005-07" db="EMBL/GenBank/DDBJ databases">
        <authorList>
            <person name="Mural R.J."/>
            <person name="Istrail S."/>
            <person name="Sutton G.G."/>
            <person name="Florea L."/>
            <person name="Halpern A.L."/>
            <person name="Mobarry C.M."/>
            <person name="Lippert R."/>
            <person name="Walenz B."/>
            <person name="Shatkay H."/>
            <person name="Dew I."/>
            <person name="Miller J.R."/>
            <person name="Flanigan M.J."/>
            <person name="Edwards N.J."/>
            <person name="Bolanos R."/>
            <person name="Fasulo D."/>
            <person name="Halldorsson B.V."/>
            <person name="Hannenhalli S."/>
            <person name="Turner R."/>
            <person name="Yooseph S."/>
            <person name="Lu F."/>
            <person name="Nusskern D.R."/>
            <person name="Shue B.C."/>
            <person name="Zheng X.H."/>
            <person name="Zhong F."/>
            <person name="Delcher A.L."/>
            <person name="Huson D.H."/>
            <person name="Kravitz S.A."/>
            <person name="Mouchard L."/>
            <person name="Reinert K."/>
            <person name="Remington K.A."/>
            <person name="Clark A.G."/>
            <person name="Waterman M.S."/>
            <person name="Eichler E.E."/>
            <person name="Adams M.D."/>
            <person name="Hunkapiller M.W."/>
            <person name="Myers E.W."/>
            <person name="Venter J.C."/>
        </authorList>
    </citation>
    <scope>NUCLEOTIDE SEQUENCE [LARGE SCALE GENOMIC DNA]</scope>
</reference>
<reference key="8">
    <citation type="journal article" date="2004" name="Genome Res.">
        <title>The status, quality, and expansion of the NIH full-length cDNA project: the Mammalian Gene Collection (MGC).</title>
        <authorList>
            <consortium name="The MGC Project Team"/>
        </authorList>
    </citation>
    <scope>NUCLEOTIDE SEQUENCE [LARGE SCALE MRNA] (ISOFORM 1)</scope>
    <scope>VARIANT GLN-594</scope>
    <source>
        <tissue>Lung</tissue>
    </source>
</reference>
<reference key="9">
    <citation type="journal article" date="1994" name="Nat. Genet.">
        <title>Human methylenetetrahydrofolate reductase: isolation of cDNA, mapping and mutation identification.</title>
        <authorList>
            <person name="Goyette P."/>
            <person name="Sumner J.S."/>
            <person name="Milos R."/>
            <person name="Duncan A.M.V."/>
            <person name="Rosenblatt D.S."/>
            <person name="Matthews R.G."/>
            <person name="Rozen R."/>
        </authorList>
    </citation>
    <scope>NUCLEOTIDE SEQUENCE [MRNA] OF 1-415 (ISOFORM 1)</scope>
    <scope>VARIANT HOMOCYSTINURIA GLN-157</scope>
    <source>
        <tissue>Liver</tissue>
    </source>
</reference>
<reference key="10">
    <citation type="journal article" date="1994" name="Nat. Genet.">
        <authorList>
            <person name="Goyette P."/>
            <person name="Sumner J.S."/>
            <person name="Milos R."/>
            <person name="Duncan A.M.V."/>
            <person name="Rosenblatt D.S."/>
            <person name="Matthews R.G."/>
            <person name="Rozen R."/>
        </authorList>
    </citation>
    <scope>ERRATUM OF PUBMED:7920641</scope>
</reference>
<reference key="11">
    <citation type="journal article" date="2002" name="Mamm. Genome">
        <title>Multiple transcription start sites and alternative splicing in the methylenetetrahydrofolate reductase gene result in two enzyme isoforms.</title>
        <authorList>
            <person name="Tran P."/>
            <person name="Leclerc D."/>
            <person name="Chan M."/>
            <person name="Pai A."/>
            <person name="Hiou-Tim F."/>
            <person name="Wu Q."/>
            <person name="Goyette P."/>
            <person name="Artigas C."/>
            <person name="Milos R."/>
            <person name="Rozen R."/>
        </authorList>
    </citation>
    <scope>NUCLEOTIDE SEQUENCE [GENOMIC DNA / MRNA] OF 1-71 (ISOFORM 2)</scope>
    <scope>ALTERNATIVE SPLICING</scope>
</reference>
<reference key="12">
    <citation type="journal article" date="2005" name="Am. J. Med. Genet. B Neuropsychiatr. Genet.">
        <title>A meta-analysis of the MTHFR C677T polymorphism and schizophrenia risk.</title>
        <authorList>
            <person name="Lewis S.J."/>
            <person name="Zammit S."/>
            <person name="Gunnell D."/>
            <person name="Smith G.D."/>
        </authorList>
    </citation>
    <scope>INVOLVEMENT IN SCZD</scope>
    <scope>VARIANT VAL-222</scope>
</reference>
<reference key="13">
    <citation type="journal article" date="2008" name="Nat. Genet.">
        <title>Systematic meta-analyses and field synopsis of genetic association studies in schizophrenia: the SzGene database.</title>
        <authorList>
            <person name="Allen N.C."/>
            <person name="Bagade S."/>
            <person name="McQueen M.B."/>
            <person name="Ioannidis J.P."/>
            <person name="Kavvoura F.K."/>
            <person name="Khoury M.J."/>
            <person name="Tanzi R.E."/>
            <person name="Bertram L."/>
        </authorList>
    </citation>
    <scope>INVOLVEMENT IN SCZD</scope>
    <scope>VARIANT VAL-222</scope>
</reference>
<reference key="14">
    <citation type="journal article" date="2011" name="BMC Syst. Biol.">
        <title>Initial characterization of the human central proteome.</title>
        <authorList>
            <person name="Burkard T.R."/>
            <person name="Planyavsky M."/>
            <person name="Kaupe I."/>
            <person name="Breitwieser F.P."/>
            <person name="Buerckstuemmer T."/>
            <person name="Bennett K.L."/>
            <person name="Superti-Furga G."/>
            <person name="Colinge J."/>
        </authorList>
    </citation>
    <scope>IDENTIFICATION BY MASS SPECTROMETRY [LARGE SCALE ANALYSIS]</scope>
</reference>
<reference key="15">
    <citation type="journal article" date="1995" name="Am. J. Hum. Genet.">
        <title>Seven novel mutations in the methylenetetrahydrofolate reductase gene and genotype/phenotype correlations in severe methylenetetrahydrofolate reductase deficiency.</title>
        <authorList>
            <person name="Goyette P."/>
            <person name="Frosst P."/>
            <person name="Rosenblatt D.S."/>
            <person name="Rozen R."/>
        </authorList>
    </citation>
    <scope>VARIANTS MTHFRD GLN-52; MET-227; LEU-251; CYS-325; CYS-335 AND CYS-357</scope>
    <scope>SEQUENCE REVISION TO 177</scope>
</reference>
<reference key="16">
    <citation type="journal article" date="1995" name="Lancet">
        <title>Mutated methylenetetrahydrofolate reductase as a risk factor for spina bifida.</title>
        <authorList>
            <person name="van der Put N.M.J."/>
            <person name="Steegers-Theunissen R.P.M."/>
            <person name="Frosst P."/>
            <person name="Trijbels F.J.M."/>
            <person name="Eskes T.K.A.B."/>
            <person name="van den Heuvel L.P."/>
            <person name="Mariman E.C.M."/>
            <person name="den Heyer M."/>
            <person name="Rozen R."/>
            <person name="Blom H.J."/>
        </authorList>
    </citation>
    <scope>INVOLVEMENT IN SUSCEPTIBILITY TO NTDFS</scope>
    <scope>VARIANT VAL-222</scope>
</reference>
<reference key="17">
    <citation type="journal article" date="1995" name="Nat. Genet.">
        <title>A candidate genetic risk factor for vascular disease: a common mutation in methylenetetrahydrofolate reductase.</title>
        <authorList>
            <person name="Frosst P."/>
            <person name="Blom H.J."/>
            <person name="Milos R."/>
            <person name="Goyette P."/>
            <person name="Sheppard C.A."/>
            <person name="Matthews R.G."/>
            <person name="Boers G.J.H."/>
            <person name="den Heijer M."/>
            <person name="Kluijtmans L.A.J."/>
            <person name="van den Heuvel L.P."/>
            <person name="Rozen R."/>
        </authorList>
    </citation>
    <scope>VARIANT VAL-222</scope>
</reference>
<reference key="18">
    <citation type="journal article" date="1996" name="Am. J. Med. Genet.">
        <title>5,10 Methylenetetrahydrofolate reductase genetic polymorphism as a risk factor for neural tube defects.</title>
        <authorList>
            <person name="Ou C.Y."/>
            <person name="Stevenson R.E."/>
            <person name="Brown V.K."/>
            <person name="Schwartz C.E."/>
            <person name="Allen W.P."/>
            <person name="Khoury M.J."/>
            <person name="Rozen R."/>
            <person name="Oakley G.P. Jr."/>
            <person name="Adams M.J. Jr."/>
        </authorList>
    </citation>
    <scope>INVOLVEMENT IN SUSCEPTIBILITY TO NTDFS</scope>
    <scope>VARIANT VAL-222</scope>
</reference>
<reference key="19">
    <citation type="journal article" date="1996" name="Am. J. Hum. Genet.">
        <title>Severe and mild mutations in cis for the methylenetetrahydrofolate reductase (MTHFR) gene, and description of five novel mutations in MTHFR.</title>
        <authorList>
            <person name="Goyette P."/>
            <person name="Christensen B."/>
            <person name="Rosenblatt D.S."/>
            <person name="Rozen R."/>
        </authorList>
    </citation>
    <scope>VARIANTS MTHFRD PRO-51; PRO-323 AND CYS-377</scope>
</reference>
<reference key="20">
    <citation type="journal article" date="1996" name="Cancer Res.">
        <title>A methylenetetrahydrofolate reductase polymorphism and the risk of colorectal cancer.</title>
        <authorList>
            <person name="Chen J."/>
            <person name="Giovannucci E."/>
            <person name="Kelsey K."/>
            <person name="Rimm E.B."/>
            <person name="Stampfer M.J."/>
            <person name="Colditz G.A."/>
            <person name="Spiegelman D."/>
            <person name="Willett W.C."/>
            <person name="Hunter D.J."/>
        </authorList>
    </citation>
    <scope>INVERSE ASSOCIATION OF VARIANT VAL-222 WITH COLORECTAL CANCER</scope>
</reference>
<reference evidence="31" key="21">
    <citation type="journal article" date="2018" name="Nat. Commun.">
        <title>Structural basis for the regulation of human 5,10-methylenetetrahydrofolate reductase by phosphorylation and S-adenosylmethionine inhibition.</title>
        <authorList>
            <person name="Froese D.S."/>
            <person name="Kopec J."/>
            <person name="Rembeza E."/>
            <person name="Bezerra G.A."/>
            <person name="Oberholzer A.E."/>
            <person name="Suormala T."/>
            <person name="Lutz S."/>
            <person name="Chalk R."/>
            <person name="Borkowska O."/>
            <person name="Baumgartner M.R."/>
            <person name="Yue W.W."/>
        </authorList>
    </citation>
    <scope>X-RAY CRYSTALLOGRAPHY (2.50 ANGSTROMS) OF 37-644 IN COMPLEX WITH S-ADENOSYLMETHIONINE AND FAD</scope>
    <scope>FUNCTION</scope>
    <scope>SUBUNIT</scope>
    <scope>ACTIVITY REGULATION</scope>
    <scope>CATALYTIC ACTIVITY</scope>
    <scope>COFACTOR</scope>
    <scope>PHOSPHORYLATION AT SER-9; SER-10; SER-18; SER-20; SER-21; SER-23; SER-25; SER-26; SER-29; SER-30; THR-34; TYR-90; THR-94; SER-103; SER-394 AND THR-451</scope>
    <scope>BIOPHYSICOCHEMICAL PROPERTIES</scope>
    <scope>MUTAGENESIS OF ALA-368 AND GLU-463</scope>
    <scope>DOMAIN</scope>
</reference>
<reference key="22">
    <citation type="journal article" date="1998" name="Am. J. Hum. Genet.">
        <title>Worldwide distribution of a common methylenetetrahydrofolate reductase mutation.</title>
        <authorList>
            <person name="Schneider J.A."/>
            <person name="Rees D.C."/>
            <person name="Liu Y.-T."/>
            <person name="Clegg J.B."/>
        </authorList>
    </citation>
    <scope>VARIANT VAL-222</scope>
</reference>
<reference key="23">
    <citation type="journal article" date="1998" name="Am. J. Hum. Genet.">
        <title>A second mutation in the methylenetetrahydrofolate reductase gene: an additional risk factor for neural-tube defects?</title>
        <authorList>
            <person name="van der Put N.M.J."/>
            <person name="Gabreels F."/>
            <person name="Stevens E.M.B."/>
            <person name="Smeitink J.A.M."/>
            <person name="Trijbels F.J.M."/>
            <person name="Eskes T.K.A.B."/>
            <person name="van den Heuvel L.P."/>
            <person name="Blom H.J."/>
        </authorList>
    </citation>
    <scope>VARIANT ALA-429</scope>
</reference>
<reference key="24">
    <citation type="journal article" date="1998" name="Eur. J. Hum. Genet.">
        <title>Identification of four novel mutations in severe methylenetetrahydrofolate reductase deficiency.</title>
        <authorList>
            <person name="Kluijtmans L.A.J."/>
            <person name="Wendel U."/>
            <person name="Stevens E.M.B."/>
            <person name="van den Heuvel L.P.W.J."/>
            <person name="Trijbels F.J.M."/>
            <person name="Blom H.J."/>
        </authorList>
    </citation>
    <scope>VARIANTS MTHFRD SER-324 AND GLY-339</scope>
</reference>
<reference key="25">
    <citation type="journal article" date="1998" name="Mol. Genet. Metab.">
        <title>A second genetic polymorphism in methylenetetrahydrofolate reductase (MTHFR) associated with decreased enzyme activity.</title>
        <authorList>
            <person name="Weisberg I."/>
            <person name="Tran P."/>
            <person name="Christiensen B."/>
            <person name="Sibani S."/>
            <person name="Rozen R."/>
        </authorList>
    </citation>
    <scope>VARIANT ALA-429</scope>
</reference>
<reference key="26">
    <citation type="journal article" date="1999" name="Am. J. Med. Genet.">
        <title>Genetic polymorphisms in methylenetetrahydrofolate reductase and methionine synthase, folate levels in red blood cells, and risk of neural tube defects.</title>
        <authorList>
            <person name="Christensen B."/>
            <person name="Arbour L."/>
            <person name="Tran P."/>
            <person name="Leclerc D."/>
            <person name="Sabbaghian N."/>
            <person name="Platt R."/>
            <person name="Gilfix B.M."/>
            <person name="Rosenblatt D.S."/>
            <person name="Gravel R.A."/>
            <person name="Forbes P."/>
            <person name="Rozen R."/>
        </authorList>
    </citation>
    <scope>INVOLVEMENT IN SUSCEPTIBILITY TO NTDFS</scope>
    <scope>VARIANT VAL-222</scope>
</reference>
<reference key="27">
    <citation type="journal article" date="1999" name="Proc. Natl. Acad. Sci. U.S.A.">
        <title>Polymorphisms in the methylenetetrahydrofolate reductase gene are associated with susceptibility to acute leukemia in adults.</title>
        <authorList>
            <person name="Skibola C.F."/>
            <person name="Smith M.T."/>
            <person name="Kane E."/>
            <person name="Roman E."/>
            <person name="Rollinson S."/>
            <person name="Cartwright R.A."/>
            <person name="Morgan G."/>
        </authorList>
    </citation>
    <scope>VARIANTS VAL-222 AND ALA-429</scope>
    <scope>ASSOCIATION WITH SUSCEPTIBILITY TO ACUTE LEUKEMIA</scope>
</reference>
<reference key="28">
    <citation type="journal article" date="2000" name="Hum. Mutat.">
        <title>Characterization of six novel mutations in the methylenetetrahydrofolate reductase (MTHFR) gene in patients with homocystinuria.</title>
        <authorList>
            <person name="Sibani S."/>
            <person name="Christensen B."/>
            <person name="O'Ferrall E."/>
            <person name="Saadi I."/>
            <person name="Hiou-Tim F."/>
            <person name="Rosenblatt D.S."/>
            <person name="Rozen R."/>
        </authorList>
    </citation>
    <scope>VARIANTS MTHFRD ASP-387; LEU-572 AND LYS-586</scope>
</reference>
<reference key="29">
    <citation type="journal article" date="2004" name="Arch. Neurol.">
        <title>Meta-analysis of genetic studies in ischemic stroke: thirty-two genes involving approximately 18,000 cases and 58,000 controls.</title>
        <authorList>
            <person name="Casas J.P."/>
            <person name="Hingorani A.D."/>
            <person name="Bautista L.E."/>
            <person name="Sharma P."/>
        </authorList>
    </citation>
    <scope>ASSOCIATION OF VARIANT VAL-222 WITH SUSCEPTIBILITY TO ISCHSTR</scope>
</reference>
<reference key="30">
    <citation type="journal article" date="2008" name="Nature">
        <title>DNA sequencing of a cytogenetically normal acute myeloid leukaemia genome.</title>
        <authorList>
            <person name="Ley T.J."/>
            <person name="Mardis E.R."/>
            <person name="Ding L."/>
            <person name="Fulton B."/>
            <person name="McLellan M.D."/>
            <person name="Chen K."/>
            <person name="Dooling D."/>
            <person name="Dunford-Shore B.H."/>
            <person name="McGrath S."/>
            <person name="Hickenbotham M."/>
            <person name="Cook L."/>
            <person name="Abbott R."/>
            <person name="Larson D.E."/>
            <person name="Koboldt D.C."/>
            <person name="Pohl C."/>
            <person name="Smith S."/>
            <person name="Hawkins A."/>
            <person name="Abbott S."/>
            <person name="Locke D."/>
            <person name="Hillier L.W."/>
            <person name="Miner T."/>
            <person name="Fulton L."/>
            <person name="Magrini V."/>
            <person name="Wylie T."/>
            <person name="Glasscock J."/>
            <person name="Conyers J."/>
            <person name="Sander N."/>
            <person name="Shi X."/>
            <person name="Osborne J.R."/>
            <person name="Minx P."/>
            <person name="Gordon D."/>
            <person name="Chinwalla A."/>
            <person name="Zhao Y."/>
            <person name="Ries R.E."/>
            <person name="Payton J.E."/>
            <person name="Westervelt P."/>
            <person name="Tomasson M.H."/>
            <person name="Watson M."/>
            <person name="Baty J."/>
            <person name="Ivanovich J."/>
            <person name="Heath S."/>
            <person name="Shannon W.D."/>
            <person name="Nagarajan R."/>
            <person name="Walter M.J."/>
            <person name="Link D.C."/>
            <person name="Graubert T.A."/>
            <person name="DiPersio J.F."/>
            <person name="Wilson R.K."/>
        </authorList>
    </citation>
    <scope>VARIANT [LARGE SCALE ANALYSIS] ALA-470</scope>
</reference>
<reference key="31">
    <citation type="journal article" date="2010" name="Clin. Genet.">
        <title>Molecular characterization of five patients with homocystinuria due to severe methylenetetrahydrofolate reductase deficiency.</title>
        <authorList>
            <person name="Urreizti R."/>
            <person name="Moya-Garcia A.A."/>
            <person name="Pino-Angeles A."/>
            <person name="Cozar M."/>
            <person name="Langkilde A."/>
            <person name="Fanhoe U."/>
            <person name="Esteves C."/>
            <person name="Arribas J."/>
            <person name="Vilaseca M.A."/>
            <person name="Perez-Duenas B."/>
            <person name="Pineda M."/>
            <person name="Gonzalez V."/>
            <person name="Artuch R."/>
            <person name="Baldellou A."/>
            <person name="Vilarinho L."/>
            <person name="Fowler B."/>
            <person name="Ribes A."/>
            <person name="Sanchez-Jimenez F."/>
            <person name="Grinberg D."/>
            <person name="Balcells S."/>
        </authorList>
    </citation>
    <scope>VARIANTS MTHFRD LEU-218; SER-435 AND GLY-574</scope>
    <scope>CHARACTERIZATION OF VARIANT MTHFRD LEU-218</scope>
    <scope>CHARACTERIZATION OF VARIANT VAL-222</scope>
    <scope>COFACTOR</scope>
</reference>
<reference key="32">
    <citation type="journal article" date="2015" name="Epilepsia">
        <title>Diagnostic yield of genetic testing in epileptic encephalopathy in childhood.</title>
        <authorList>
            <person name="Mercimek-Mahmutoglu S."/>
            <person name="Patel J."/>
            <person name="Cordeiro D."/>
            <person name="Hewson S."/>
            <person name="Callen D."/>
            <person name="Donner E.J."/>
            <person name="Hahn C.D."/>
            <person name="Kannu P."/>
            <person name="Kobayashi J."/>
            <person name="Minassian B.A."/>
            <person name="Moharir M."/>
            <person name="Siriwardena K."/>
            <person name="Weiss S.K."/>
            <person name="Weksberg R."/>
            <person name="Snead O.C. III"/>
        </authorList>
    </citation>
    <scope>VARIANT MTHFRD SER-435</scope>
</reference>
<reference key="33">
    <citation type="journal article" date="2015" name="Hum. Mutat.">
        <title>Insights into severe 5,10-methylenetetrahydrofolate reductase deficiency: molecular genetic and enzymatic characterization of 76 patients.</title>
        <authorList>
            <person name="Burda P."/>
            <person name="Schaefer A."/>
            <person name="Suormala T."/>
            <person name="Rummel T."/>
            <person name="Buerer C."/>
            <person name="Heuberger D."/>
            <person name="Frapolli M."/>
            <person name="Giunta C."/>
            <person name="Sokolova J."/>
            <person name="Vlaskova H."/>
            <person name="Kozich V."/>
            <person name="Koch H.G."/>
            <person name="Fowler B."/>
            <person name="Froese D.S."/>
            <person name="Baumgartner M.R."/>
        </authorList>
    </citation>
    <scope>VARIANTS MTHFRD GLN-46; TRP-46; GLN-52; SER-59; GLY-68; TRP-82; THR-113; TYR-127; ASN-129; ARG-130; PRO-147; VAL-149; MET-153; GLN-157; THR-175; GLN-183; VAL-195; ASP-196; LYS-215 DEL; LEU-225; ILE-226 DEL; PHE-253; SER-254; VAL-255; ASN-256; VAL-257; HIS-335; THR-338; GLY-339; SER-348; TYR-354; HIS-363; GLU-372; CYS-377; HIS-377; ASP-387; SER-421; ASP-506; PHE-536; LEU-572; GLY-574; GLY-575; PRO-598 AND PRO-628</scope>
    <scope>CHARACTERIZATION OF VARIANTS MTHFRD GLN-46; TRP-46; GLN-52; SER-59; GLY-68; TRP-82; THR-113; TYR-127; ASN-129; ARG-130; PRO-147; VAL-149; MET-153; GLN-157; THR-175; GLN-183; VAL-195; ASP-196; LYS-215 DEL; LEU-225; ILE-226 DEL; PHE-253; SER-254; VAL-255; ASN-256; VAL-257; HIS-335; THR-338; GLY-339; SER-348; TYR-354; HIS-363; GLU-372; CYS-377; HIS-377; ASP-387; SER-421; ASP-506; PHE-536; LEU-572; GLY-574; GLY-575; PRO-598 AND PRO-628</scope>
    <scope>FUNCTION</scope>
    <scope>CATALYTIC ACTIVITY</scope>
</reference>
<proteinExistence type="evidence at protein level"/>
<keyword id="KW-0002">3D-structure</keyword>
<keyword id="KW-0021">Allosteric enzyme</keyword>
<keyword id="KW-0025">Alternative splicing</keyword>
<keyword id="KW-0225">Disease variant</keyword>
<keyword id="KW-0274">FAD</keyword>
<keyword id="KW-0285">Flavoprotein</keyword>
<keyword id="KW-0521">NADP</keyword>
<keyword id="KW-0560">Oxidoreductase</keyword>
<keyword id="KW-0597">Phosphoprotein</keyword>
<keyword id="KW-1267">Proteomics identification</keyword>
<keyword id="KW-1185">Reference proteome</keyword>
<keyword id="KW-1211">Schizophrenia</keyword>
<sequence length="656" mass="74597">MVNEARGNSSLNPCLEGSASSGSESSKDSSRCSTPGLDPERHERLREKMRRRLESGDKWFSLEFFPPRTAEGAVNLISRFDRMAAGGPLYIDVTWHPAGDPGSDKETSSMMIASTAVNYCGLETILHMTCCRQRLEEITGHLHKAKQLGLKNIMALRGDPIGDQWEEEEGGFNYAVDLVKHIRSEFGDYFDICVAGYPKGHPEAGSFEADLKHLKEKVSAGADFIITQLFFEADTFFRFVKACTDMGITCPIVPGIFPIQGYHSLRQLVKLSKLEVPQEIKDVIEPIKDNDAAIRNYGIELAVSLCQELLASGLVPGLHFYTLNREMATTEVLKRLGMWTEDPRRPLPWALSAHPKRREEDVRPIFWASRPKSYIYRTQEWDEFPNGRWGNSSSPAFGELKDYYLFYLKSKSPKEELLKMWGEELTSEESVFEVFVLYLSGEPNRNGHKVTCLPWNDEPLAAETSLLKEELLRVNRQGILTINSQPNINGKPSSDPIVGWGPSGGYVFQKAYLEFFTSRETAEALLQVLKKYELRVNYHLVNVKGENITNAPELQPNAVTWGIFPGREIIQPTVVDPVSFMFWKDEAFALWIERWGKLYEEESPSRTIIQYIHDNYFLVNLVDNDFPLDNCLWQVVEDTLELLNRPTQNARETEAP</sequence>
<protein>
    <recommendedName>
        <fullName evidence="28">Methylenetetrahydrofolate reductase (NADPH)</fullName>
        <ecNumber evidence="13 15">1.5.1.53</ecNumber>
    </recommendedName>
</protein>
<feature type="chain" id="PRO_0000190245" description="Methylenetetrahydrofolate reductase (NADPH)">
    <location>
        <begin position="1"/>
        <end position="656"/>
    </location>
</feature>
<feature type="region of interest" description="Disordered" evidence="2">
    <location>
        <begin position="1"/>
        <end position="44"/>
    </location>
</feature>
<feature type="compositionally biased region" description="Polar residues" evidence="2">
    <location>
        <begin position="1"/>
        <end position="12"/>
    </location>
</feature>
<feature type="active site" description="Proton donor/acceptor" evidence="1">
    <location>
        <position position="63"/>
    </location>
</feature>
<feature type="binding site" evidence="1">
    <location>
        <begin position="63"/>
        <end position="68"/>
    </location>
    <ligand>
        <name>NAD(+)</name>
        <dbReference type="ChEBI" id="CHEBI:57540"/>
    </ligand>
</feature>
<feature type="binding site" evidence="15">
    <location>
        <begin position="94"/>
        <end position="95"/>
    </location>
    <ligand>
        <name>FAD</name>
        <dbReference type="ChEBI" id="CHEBI:57692"/>
    </ligand>
</feature>
<feature type="binding site" evidence="1">
    <location>
        <begin position="94"/>
        <end position="95"/>
    </location>
    <ligand>
        <name>NAD(+)</name>
        <dbReference type="ChEBI" id="CHEBI:57540"/>
    </ligand>
</feature>
<feature type="binding site" evidence="15">
    <location>
        <position position="127"/>
    </location>
    <ligand>
        <name>FAD</name>
        <dbReference type="ChEBI" id="CHEBI:57692"/>
    </ligand>
</feature>
<feature type="binding site" evidence="15">
    <location>
        <begin position="157"/>
        <end position="159"/>
    </location>
    <ligand>
        <name>FAD</name>
        <dbReference type="ChEBI" id="CHEBI:57692"/>
    </ligand>
</feature>
<feature type="binding site" evidence="1">
    <location>
        <position position="159"/>
    </location>
    <ligand>
        <name>substrate</name>
    </ligand>
</feature>
<feature type="binding site" evidence="15">
    <location>
        <begin position="174"/>
        <end position="175"/>
    </location>
    <ligand>
        <name>FAD</name>
        <dbReference type="ChEBI" id="CHEBI:57692"/>
    </ligand>
</feature>
<feature type="binding site" evidence="15">
    <location>
        <position position="197"/>
    </location>
    <ligand>
        <name>FAD</name>
        <dbReference type="ChEBI" id="CHEBI:57692"/>
    </ligand>
</feature>
<feature type="binding site" evidence="15">
    <location>
        <begin position="201"/>
        <end position="204"/>
    </location>
    <ligand>
        <name>FAD</name>
        <dbReference type="ChEBI" id="CHEBI:57692"/>
    </ligand>
</feature>
<feature type="binding site" evidence="15">
    <location>
        <position position="210"/>
    </location>
    <ligand>
        <name>FAD</name>
        <dbReference type="ChEBI" id="CHEBI:57692"/>
    </ligand>
</feature>
<feature type="binding site" evidence="15">
    <location>
        <position position="217"/>
    </location>
    <ligand>
        <name>FAD</name>
        <dbReference type="ChEBI" id="CHEBI:57692"/>
    </ligand>
</feature>
<feature type="binding site" evidence="1">
    <location>
        <position position="228"/>
    </location>
    <ligand>
        <name>substrate</name>
    </ligand>
</feature>
<feature type="binding site" evidence="1">
    <location>
        <position position="321"/>
    </location>
    <ligand>
        <name>substrate</name>
    </ligand>
</feature>
<feature type="binding site" evidence="1">
    <location>
        <position position="325"/>
    </location>
    <ligand>
        <name>substrate</name>
    </ligand>
</feature>
<feature type="binding site" evidence="15">
    <location>
        <position position="456"/>
    </location>
    <ligand>
        <name>S-adenosyl-L-methionine</name>
        <dbReference type="ChEBI" id="CHEBI:59789"/>
    </ligand>
</feature>
<feature type="binding site" evidence="15">
    <location>
        <begin position="461"/>
        <end position="464"/>
    </location>
    <ligand>
        <name>S-adenosyl-L-methionine</name>
        <dbReference type="ChEBI" id="CHEBI:59789"/>
    </ligand>
</feature>
<feature type="binding site" evidence="15">
    <location>
        <begin position="481"/>
        <end position="485"/>
    </location>
    <ligand>
        <name>S-adenosyl-L-methionine</name>
        <dbReference type="ChEBI" id="CHEBI:59789"/>
    </ligand>
</feature>
<feature type="binding site" evidence="15">
    <location>
        <position position="560"/>
    </location>
    <ligand>
        <name>S-adenosyl-L-methionine</name>
        <dbReference type="ChEBI" id="CHEBI:59789"/>
    </ligand>
</feature>
<feature type="binding site" evidence="15">
    <location>
        <position position="573"/>
    </location>
    <ligand>
        <name>S-adenosyl-L-methionine</name>
        <dbReference type="ChEBI" id="CHEBI:59789"/>
    </ligand>
</feature>
<feature type="modified residue" description="Phosphoserine" evidence="15">
    <location>
        <position position="9"/>
    </location>
</feature>
<feature type="modified residue" description="Phosphoserine" evidence="15">
    <location>
        <position position="10"/>
    </location>
</feature>
<feature type="modified residue" description="Phosphoserine" evidence="15">
    <location>
        <position position="18"/>
    </location>
</feature>
<feature type="modified residue" description="Phosphoserine" evidence="15">
    <location>
        <position position="20"/>
    </location>
</feature>
<feature type="modified residue" description="Phosphoserine" evidence="15">
    <location>
        <position position="21"/>
    </location>
</feature>
<feature type="modified residue" description="Phosphoserine" evidence="15">
    <location>
        <position position="23"/>
    </location>
</feature>
<feature type="modified residue" description="Phosphoserine" evidence="15">
    <location>
        <position position="25"/>
    </location>
</feature>
<feature type="modified residue" description="Phosphoserine" evidence="15">
    <location>
        <position position="26"/>
    </location>
</feature>
<feature type="modified residue" description="Phosphoserine" evidence="15">
    <location>
        <position position="29"/>
    </location>
</feature>
<feature type="modified residue" description="Phosphoserine" evidence="15">
    <location>
        <position position="30"/>
    </location>
</feature>
<feature type="modified residue" description="Phosphothreonine" evidence="15">
    <location>
        <position position="34"/>
    </location>
</feature>
<feature type="modified residue" description="Phosphotyrosine" evidence="15">
    <location>
        <position position="90"/>
    </location>
</feature>
<feature type="modified residue" description="Phosphothreonine" evidence="15">
    <location>
        <position position="94"/>
    </location>
</feature>
<feature type="modified residue" description="Phosphoserine" evidence="15">
    <location>
        <position position="103"/>
    </location>
</feature>
<feature type="modified residue" description="Phosphoserine" evidence="15">
    <location>
        <position position="394"/>
    </location>
</feature>
<feature type="modified residue" description="Phosphothreonine" evidence="15">
    <location>
        <position position="451"/>
    </location>
</feature>
<feature type="splice variant" id="VSP_053744" description="In isoform 2." evidence="27">
    <original>M</original>
    <variation>MDHRKARVLPAGHYCPSLGIWASQVGSVRSSVPPSISRNPAM</variation>
    <location>
        <position position="1"/>
    </location>
</feature>
<feature type="sequence variant" id="VAR_074111" description="In MTHFRD; reduces methylenetetrahydrofolate reductase activity; no effect on affinity for NADPH; dbSNP:rs776483190." evidence="13">
    <original>R</original>
    <variation>Q</variation>
    <location>
        <position position="46"/>
    </location>
</feature>
<feature type="sequence variant" id="VAR_074112" description="In MTHFRD; reduced methylenetetrahydrofolate reductase activity; no effect on affinity for NADPH; dbSNP:rs138189536." evidence="13">
    <original>R</original>
    <variation>W</variation>
    <location>
        <position position="46"/>
    </location>
</feature>
<feature type="sequence variant" id="VAR_009530" description="In MTHFRD; dbSNP:rs201618781." evidence="21">
    <original>R</original>
    <variation>P</variation>
    <location>
        <position position="51"/>
    </location>
</feature>
<feature type="sequence variant" id="VAR_004319" description="In MTHFRD; reduced methylenetetrahydrofolate reductase activity; reduced affinity for NADPH; dbSNP:rs754980119." evidence="13 18">
    <original>R</original>
    <variation>Q</variation>
    <location>
        <position position="52"/>
    </location>
</feature>
<feature type="sequence variant" id="VAR_074113" description="In MTHFRD; loss of methylenetetrahydrofolate reductase activity; dbSNP:rs786204007." evidence="13">
    <original>W</original>
    <variation>S</variation>
    <location>
        <position position="59"/>
    </location>
</feature>
<feature type="sequence variant" id="VAR_074114" description="In MTHFRD; reduced methylenetetrahydrofolate reductase activity; reduced affinity for NADPH; dbSNP:rs763539350." evidence="13">
    <original>R</original>
    <variation>G</variation>
    <location>
        <position position="68"/>
    </location>
</feature>
<feature type="sequence variant" id="VAR_014881" description="In dbSNP:rs2066472." evidence="26">
    <original>R</original>
    <variation>Q</variation>
    <location>
        <position position="68"/>
    </location>
</feature>
<feature type="sequence variant" id="VAR_074115" description="In MTHFRD; reduced methylenetetrahydrofolate reductase activity; no effect on affinity for NADPH; dbSNP:rs786204009." evidence="13">
    <original>R</original>
    <variation>W</variation>
    <location>
        <position position="82"/>
    </location>
</feature>
<feature type="sequence variant" id="VAR_074116" description="In MTHFRD; reduced methylenetetrahydrofolate reductase activity; no effect on affinity for NADPH; dbSNP:rs147257424." evidence="13">
    <original>A</original>
    <variation>T</variation>
    <location>
        <position position="113"/>
    </location>
</feature>
<feature type="sequence variant" id="VAR_074117" description="In MTHFRD; loss of methylenetetrahydrofolate reductase activity; dbSNP:rs769381688." evidence="13">
    <original>H</original>
    <variation>Y</variation>
    <location>
        <position position="127"/>
    </location>
</feature>
<feature type="sequence variant" id="VAR_074118" description="In MTHFRD; reduced methylenetetrahydrofolate reductase activity; reduced affinity for NADPH." evidence="13">
    <original>T</original>
    <variation>N</variation>
    <location>
        <position position="129"/>
    </location>
</feature>
<feature type="sequence variant" id="VAR_074119" description="In MTHFRD; reduced methylenetetrahydrofolate reductase activity; no effect on affinity for NADPH; dbSNP:rs786204012." evidence="13">
    <original>C</original>
    <variation>R</variation>
    <location>
        <position position="130"/>
    </location>
</feature>
<feature type="sequence variant" id="VAR_074120" description="In MTHFRD; loss of methylenetetrahydrofolate reductase activity; dbSNP:rs786204013." evidence="13">
    <original>Q</original>
    <variation>P</variation>
    <location>
        <position position="147"/>
    </location>
</feature>
<feature type="sequence variant" id="VAR_074121" description="In MTHFRD; loss of methylenetetrahydrofolate reductase activity." evidence="13">
    <original>G</original>
    <variation>V</variation>
    <location>
        <position position="149"/>
    </location>
</feature>
<feature type="sequence variant" id="VAR_074122" description="In MTHFRD; reduced methylenetetrahydrofolate reductase activity; no effect on affinity for NADPH; dbSNP:rs767890671." evidence="13">
    <original>I</original>
    <variation>M</variation>
    <location>
        <position position="153"/>
    </location>
</feature>
<feature type="sequence variant" id="VAR_004320" description="In MTHFRD; reduced methylenetetrahydrofolate reductase activity; reduced affinity for NADPH; dbSNP:rs121434295." evidence="13 19">
    <original>R</original>
    <variation>Q</variation>
    <location>
        <position position="157"/>
    </location>
</feature>
<feature type="sequence variant" id="VAR_074123" description="In MTHFRD; reduced methylenetetrahydrofolate reductase activity; reduced affinity for NADPH; dbSNP:rs1182635980." evidence="13">
    <original>A</original>
    <variation>T</variation>
    <location>
        <position position="175"/>
    </location>
</feature>
<feature type="sequence variant" id="VAR_074124" description="In MTHFRD; reduced methylenetetrahydrofolate reductase activity; no effect on affinity for NADPH; dbSNP:rs574132670." evidence="13">
    <original>R</original>
    <variation>Q</variation>
    <location>
        <position position="183"/>
    </location>
</feature>
<feature type="sequence variant" id="VAR_074125" description="In MTHFRD; reduced methylenetetrahydrofolate reductase activity; reduced affinity for NADPH; dbSNP:rs760161369." evidence="13">
    <original>A</original>
    <variation>V</variation>
    <location>
        <position position="195"/>
    </location>
</feature>
<feature type="sequence variant" id="VAR_074126" description="In MTHFRD; reduced methylenetetrahydrofolate reductase activity; reduced affinity for NADPH; dbSNP:rs786204014." evidence="13">
    <original>G</original>
    <variation>D</variation>
    <location>
        <position position="196"/>
    </location>
</feature>
<feature type="sequence variant" id="VAR_074127" description="In MTHFRD; loss of methylenetetrahydrofolate reductase activity." evidence="13">
    <location>
        <position position="215"/>
    </location>
</feature>
<feature type="sequence variant" id="VAR_074128" description="In MTHFRD; decreased affinity for FAD cofactor." evidence="12">
    <original>V</original>
    <variation>L</variation>
    <location>
        <position position="218"/>
    </location>
</feature>
<feature type="sequence variant" id="VAR_009528" description="At homozygosity reduces the risk for colorectal cancer in individuals with adequate folate status; decreased risk for adult acute leukemia; increased risk for NTDFS; increased risk for schizophrenia; thermolabile; decreased affinity for FAD cofactor; 50% reduced activity; dbSNP:rs1801133." evidence="4 6 9 10 12 17 23 26">
    <original>A</original>
    <variation>V</variation>
    <location>
        <position position="222"/>
    </location>
</feature>
<feature type="sequence variant" id="VAR_074129" description="In MTHFRD; reduced methylenetetrahydrofolate reductase activity; no effect on affinity for NADPH; dbSNP:rs200100285." evidence="13">
    <original>I</original>
    <variation>L</variation>
    <location>
        <position position="225"/>
    </location>
</feature>
<feature type="sequence variant" id="VAR_074130" description="In MTHFRD; reduced methylenetetrahydrofolate reductase activity; reduced affinity for NADPH." evidence="13">
    <location>
        <position position="226"/>
    </location>
</feature>
<feature type="sequence variant" id="VAR_004321" description="In MTHFRD; dbSNP:rs748571395." evidence="18">
    <original>T</original>
    <variation>M</variation>
    <location>
        <position position="227"/>
    </location>
</feature>
<feature type="sequence variant" id="VAR_004322" description="In MTHFRD." evidence="18">
    <original>P</original>
    <variation>L</variation>
    <location>
        <position position="251"/>
    </location>
</feature>
<feature type="sequence variant" id="VAR_074131" description="In MTHFRD; reduced methylenetetrahydrofolate reductase activity; reduced affinity for NADPH." evidence="13">
    <original>V</original>
    <variation>F</variation>
    <location>
        <position position="253"/>
    </location>
</feature>
<feature type="sequence variant" id="VAR_074132" description="In MTHFRD; reduced methylenetetrahydrofolate reductase activity; no effect on affinity for NADPH; dbSNP:rs786204017." evidence="13">
    <original>P</original>
    <variation>S</variation>
    <location>
        <position position="254"/>
    </location>
</feature>
<feature type="sequence variant" id="VAR_074133" description="In MTHFRD; loss of methylenetetrahydrofolate reductase activity; dbSNP:rs786204018." evidence="13">
    <original>G</original>
    <variation>V</variation>
    <location>
        <position position="255"/>
    </location>
</feature>
<feature type="sequence variant" id="VAR_074134" description="In MTHFRD; loss of methylenetetrahydrofolate reductase activity; dbSNP:rs373398993." evidence="13">
    <original>I</original>
    <variation>N</variation>
    <location>
        <position position="256"/>
    </location>
</feature>
<feature type="sequence variant" id="VAR_074135" description="In MTHFRD; loss of methylenetetrahydrofolate reductase activity; dbSNP:rs786204019." evidence="13">
    <original>F</original>
    <variation>V</variation>
    <location>
        <position position="257"/>
    </location>
</feature>
<feature type="sequence variant" id="VAR_009531" description="In MTHFRD; dbSNP:rs121434297." evidence="21">
    <original>L</original>
    <variation>P</variation>
    <location>
        <position position="323"/>
    </location>
</feature>
<feature type="sequence variant" id="VAR_009532" description="In MTHFRD; dbSNP:rs267606887." evidence="25">
    <original>N</original>
    <variation>S</variation>
    <location>
        <position position="324"/>
    </location>
</feature>
<feature type="sequence variant" id="VAR_004323" description="In MTHFRD; dbSNP:rs371085894." evidence="18">
    <original>R</original>
    <variation>C</variation>
    <location>
        <position position="325"/>
    </location>
</feature>
<feature type="sequence variant" id="VAR_004324" description="In MTHFRD; dbSNP:rs748289202." evidence="18">
    <original>R</original>
    <variation>C</variation>
    <location>
        <position position="335"/>
    </location>
</feature>
<feature type="sequence variant" id="VAR_074136" description="In MTHFRD; reduced methylenetetrahydrofolate reductase activity; no effect on affinity for NADPH; dbSNP:rs543016186." evidence="13">
    <original>R</original>
    <variation>H</variation>
    <location>
        <position position="335"/>
    </location>
</feature>
<feature type="sequence variant" id="VAR_074137" description="In MTHFRD; loss of methylenetetrahydrofolate reductase activity; dbSNP:rs368321176." evidence="13">
    <original>M</original>
    <variation>T</variation>
    <location>
        <position position="338"/>
    </location>
</feature>
<feature type="sequence variant" id="VAR_009533" description="In MTHFRD; loss of methylenetetrahydrofolate reductase activity; dbSNP:rs267606886." evidence="13 25">
    <original>W</original>
    <variation>G</variation>
    <location>
        <position position="339"/>
    </location>
</feature>
<feature type="sequence variant" id="VAR_074138" description="In MTHFRD; reduced methylenetetrahydrofolate reductase activity; reduced affinity for NADPH; dbSNP:rs786204021." evidence="13">
    <original>P</original>
    <variation>S</variation>
    <location>
        <position position="348"/>
    </location>
</feature>
<feature type="sequence variant" id="VAR_074139" description="In MTHFRD; reduced methylenetetrahydrofolate reductase activity; reduced affinity for NADPH; dbSNP:rs786204022." evidence="13">
    <original>H</original>
    <variation>Y</variation>
    <location>
        <position position="354"/>
    </location>
</feature>
<feature type="sequence variant" id="VAR_004325" description="In MTHFRD; dbSNP:rs779993607." evidence="18">
    <original>R</original>
    <variation>C</variation>
    <location>
        <position position="357"/>
    </location>
</feature>
<feature type="sequence variant" id="VAR_074140" description="In MTHFRD; reduced methylenetetrahydrofolate reductase activity; reduced affinity for NADPH; dbSNP:rs786204023." evidence="13">
    <original>R</original>
    <variation>H</variation>
    <location>
        <position position="363"/>
    </location>
</feature>
<feature type="sequence variant" id="VAR_074141" description="In MTHFRD; reduced methylenetetrahydrofolate reductase activity; reduced affinity for NADPH; dbSNP:rs786204024." evidence="13">
    <original>K</original>
    <variation>E</variation>
    <location>
        <position position="372"/>
    </location>
</feature>
<feature type="sequence variant" id="VAR_009534" description="In MTHFRD; reduced methylenetetrahydrofolate reductase activity; reduced affinity for NADPH; dbSNP:rs121434296." evidence="13 21">
    <original>R</original>
    <variation>C</variation>
    <location>
        <position position="377"/>
    </location>
</feature>
<feature type="sequence variant" id="VAR_074142" description="In MTHFRD; reduced methylenetetrahydrofolate reductase activity; reduced affinity for NADPH; dbSNP:rs750323424." evidence="13">
    <original>R</original>
    <variation>H</variation>
    <location>
        <position position="377"/>
    </location>
</feature>
<feature type="sequence variant" id="VAR_009535" description="In MTHFRD; reduced methylenetetrahydrofolate reductase activity; reduced affinity for NADPH; dbSNP:rs1430872491." evidence="5 13">
    <original>G</original>
    <variation>D</variation>
    <location>
        <position position="387"/>
    </location>
</feature>
<feature type="sequence variant" id="VAR_074143" description="In MTHFRD; reduced methylenetetrahydrofolate reductase activity; reduced affinity for NADPH; dbSNP:rs200137991." evidence="13">
    <original>W</original>
    <variation>S</variation>
    <location>
        <position position="421"/>
    </location>
</feature>
<feature type="sequence variant" id="VAR_018857" description="In dbSNP:rs45571736." evidence="26">
    <original>G</original>
    <variation>R</variation>
    <location>
        <position position="422"/>
    </location>
</feature>
<feature type="sequence variant" id="VAR_014882" description="Decreased risk for adult acute leukemia; thermolabile; decreased activity; dbSNP:rs1801131." evidence="4 22 24 26">
    <original>E</original>
    <variation>A</variation>
    <location>
        <position position="429"/>
    </location>
</feature>
<feature type="sequence variant" id="VAR_074144" description="In MTHFRD; dbSNP:rs754015864." evidence="12 14">
    <original>F</original>
    <variation>S</variation>
    <location>
        <position position="435"/>
    </location>
</feature>
<feature type="sequence variant" id="VAR_054158" evidence="11">
    <original>E</original>
    <variation>A</variation>
    <location>
        <position position="470"/>
    </location>
</feature>
<feature type="sequence variant" id="VAR_074145" description="In MTHFRD; reduced methylenetetrahydrofolate reductase activity; reduced affinity for NADPH; dbSNP:rs786204026." evidence="13">
    <original>Y</original>
    <variation>D</variation>
    <location>
        <position position="506"/>
    </location>
</feature>
<feature type="sequence variant" id="VAR_018858" description="In dbSNP:rs45496998." evidence="26">
    <original>R</original>
    <variation>C</variation>
    <location>
        <position position="519"/>
    </location>
</feature>
<feature type="sequence variant" id="VAR_050293" description="In dbSNP:rs45449298.">
    <original>R</original>
    <variation>H</variation>
    <location>
        <position position="519"/>
    </location>
</feature>
<feature type="sequence variant" id="VAR_074146" description="In MTHFRD; reduced methylenetetrahydrofolate reductase activity; reduced affinity for NADPH; dbSNP:rs786204028." evidence="13">
    <original>V</original>
    <variation>F</variation>
    <location>
        <position position="536"/>
    </location>
</feature>
<feature type="sequence variant" id="VAR_050294" description="In dbSNP:rs2274974.">
    <original>G</original>
    <variation>E</variation>
    <location>
        <position position="566"/>
    </location>
</feature>
<feature type="sequence variant" id="VAR_009536" description="In MTHFRD; reduced methylenetetrahydrofolate reductase activity; reduced affinity for NADPH; dbSNP:rs144508139." evidence="5 13">
    <original>P</original>
    <variation>L</variation>
    <location>
        <position position="572"/>
    </location>
</feature>
<feature type="sequence variant" id="VAR_074147" description="In MTHFRD; reduced methylenetetrahydrofolate reductase activity; reduced affinity for NADPH." evidence="12 13">
    <original>V</original>
    <variation>G</variation>
    <location>
        <position position="574"/>
    </location>
</feature>
<feature type="sequence variant" id="VAR_074148" description="In MTHFRD; reduced methylenetetrahydrofolate reductase activity; reduced affinity for NADPH; dbSNP:rs786204031." evidence="13">
    <original>V</original>
    <variation>G</variation>
    <location>
        <position position="575"/>
    </location>
</feature>
<feature type="sequence variant" id="VAR_009537" description="In MTHFRD; dbSNP:rs983672500." evidence="5">
    <original>E</original>
    <variation>K</variation>
    <location>
        <position position="586"/>
    </location>
</feature>
<feature type="sequence variant" id="VAR_018859" description="In dbSNP:rs2274976." evidence="7 26">
    <original>R</original>
    <variation>Q</variation>
    <location>
        <position position="594"/>
    </location>
</feature>
<feature type="sequence variant" id="VAR_074149" description="In MTHFRD; reduced methylenetetrahydrofolate reductase activity; reduced affinity for NADPH; dbSNP:rs786204034." evidence="13">
    <original>L</original>
    <variation>P</variation>
    <location>
        <position position="598"/>
    </location>
</feature>
<feature type="sequence variant" id="VAR_074150" description="In MTHFRD; reduced methylenetetrahydrofolate reductase activity; reduced affinity for NADPH; dbSNP:rs786204037." evidence="13">
    <original>L</original>
    <variation>P</variation>
    <location>
        <position position="628"/>
    </location>
</feature>
<feature type="sequence variant" id="VAR_018860" description="In dbSNP:rs35737219." evidence="26">
    <original>T</original>
    <variation>M</variation>
    <location>
        <position position="653"/>
    </location>
</feature>
<feature type="mutagenesis site" description="No effect on S-adenosylmethionine-binding." evidence="15">
    <original>A</original>
    <variation>G</variation>
    <variation>L</variation>
    <location>
        <position position="368"/>
    </location>
</feature>
<feature type="mutagenesis site" description="Loss of S-adenosylmethionine-binding." evidence="15">
    <original>E</original>
    <variation>D</variation>
    <variation>Q</variation>
    <location>
        <position position="463"/>
    </location>
</feature>
<feature type="helix" evidence="32">
    <location>
        <begin position="45"/>
        <end position="55"/>
    </location>
</feature>
<feature type="strand" evidence="32">
    <location>
        <begin position="59"/>
        <end position="64"/>
    </location>
</feature>
<feature type="helix" evidence="32">
    <location>
        <begin position="70"/>
        <end position="84"/>
    </location>
</feature>
<feature type="strand" evidence="32">
    <location>
        <begin position="89"/>
        <end position="93"/>
    </location>
</feature>
<feature type="helix" evidence="32">
    <location>
        <begin position="97"/>
        <end position="99"/>
    </location>
</feature>
<feature type="strand" evidence="32">
    <location>
        <begin position="103"/>
        <end position="105"/>
    </location>
</feature>
<feature type="helix" evidence="32">
    <location>
        <begin position="109"/>
        <end position="118"/>
    </location>
</feature>
<feature type="strand" evidence="32">
    <location>
        <begin position="124"/>
        <end position="129"/>
    </location>
</feature>
<feature type="helix" evidence="32">
    <location>
        <begin position="135"/>
        <end position="147"/>
    </location>
</feature>
<feature type="strand" evidence="32">
    <location>
        <begin position="152"/>
        <end position="156"/>
    </location>
</feature>
<feature type="helix" evidence="32">
    <location>
        <begin position="175"/>
        <end position="186"/>
    </location>
</feature>
<feature type="strand" evidence="32">
    <location>
        <begin position="189"/>
        <end position="196"/>
    </location>
</feature>
<feature type="helix" evidence="32">
    <location>
        <begin position="207"/>
        <end position="221"/>
    </location>
</feature>
<feature type="strand" evidence="32">
    <location>
        <begin position="224"/>
        <end position="227"/>
    </location>
</feature>
<feature type="helix" evidence="32">
    <location>
        <begin position="233"/>
        <end position="246"/>
    </location>
</feature>
<feature type="strand" evidence="34">
    <location>
        <begin position="252"/>
        <end position="256"/>
    </location>
</feature>
<feature type="helix" evidence="32">
    <location>
        <begin position="263"/>
        <end position="272"/>
    </location>
</feature>
<feature type="helix" evidence="32">
    <location>
        <begin position="278"/>
        <end position="284"/>
    </location>
</feature>
<feature type="helix" evidence="32">
    <location>
        <begin position="285"/>
        <end position="287"/>
    </location>
</feature>
<feature type="helix" evidence="32">
    <location>
        <begin position="291"/>
        <end position="310"/>
    </location>
</feature>
<feature type="strand" evidence="32">
    <location>
        <begin position="317"/>
        <end position="321"/>
    </location>
</feature>
<feature type="helix" evidence="32">
    <location>
        <begin position="327"/>
        <end position="336"/>
    </location>
</feature>
<feature type="strand" evidence="32">
    <location>
        <begin position="346"/>
        <end position="349"/>
    </location>
</feature>
<feature type="helix" evidence="32">
    <location>
        <begin position="355"/>
        <end position="357"/>
    </location>
</feature>
<feature type="helix" evidence="32">
    <location>
        <begin position="365"/>
        <end position="367"/>
    </location>
</feature>
<feature type="helix" evidence="32">
    <location>
        <begin position="371"/>
        <end position="378"/>
    </location>
</feature>
<feature type="turn" evidence="34">
    <location>
        <begin position="386"/>
        <end position="389"/>
    </location>
</feature>
<feature type="helix" evidence="34">
    <location>
        <begin position="400"/>
        <end position="402"/>
    </location>
</feature>
<feature type="helix" evidence="32">
    <location>
        <begin position="405"/>
        <end position="407"/>
    </location>
</feature>
<feature type="helix" evidence="32">
    <location>
        <begin position="414"/>
        <end position="421"/>
    </location>
</feature>
<feature type="helix" evidence="32">
    <location>
        <begin position="428"/>
        <end position="440"/>
    </location>
</feature>
<feature type="turn" evidence="33">
    <location>
        <begin position="454"/>
        <end position="456"/>
    </location>
</feature>
<feature type="helix" evidence="32">
    <location>
        <begin position="462"/>
        <end position="466"/>
    </location>
</feature>
<feature type="helix" evidence="32">
    <location>
        <begin position="468"/>
        <end position="476"/>
    </location>
</feature>
<feature type="strand" evidence="32">
    <location>
        <begin position="480"/>
        <end position="485"/>
    </location>
</feature>
<feature type="strand" evidence="32">
    <location>
        <begin position="488"/>
        <end position="492"/>
    </location>
</feature>
<feature type="turn" evidence="32">
    <location>
        <begin position="496"/>
        <end position="498"/>
    </location>
</feature>
<feature type="strand" evidence="32">
    <location>
        <begin position="506"/>
        <end position="509"/>
    </location>
</feature>
<feature type="strand" evidence="32">
    <location>
        <begin position="511"/>
        <end position="517"/>
    </location>
</feature>
<feature type="helix" evidence="32">
    <location>
        <begin position="519"/>
        <end position="529"/>
    </location>
</feature>
<feature type="helix" evidence="32">
    <location>
        <begin position="530"/>
        <end position="532"/>
    </location>
</feature>
<feature type="turn" evidence="32">
    <location>
        <begin position="533"/>
        <end position="535"/>
    </location>
</feature>
<feature type="strand" evidence="32">
    <location>
        <begin position="536"/>
        <end position="542"/>
    </location>
</feature>
<feature type="strand" evidence="32">
    <location>
        <begin position="547"/>
        <end position="549"/>
    </location>
</feature>
<feature type="helix" evidence="32">
    <location>
        <begin position="552"/>
        <end position="554"/>
    </location>
</feature>
<feature type="strand" evidence="32">
    <location>
        <begin position="557"/>
        <end position="563"/>
    </location>
</feature>
<feature type="strand" evidence="32">
    <location>
        <begin position="570"/>
        <end position="575"/>
    </location>
</feature>
<feature type="helix" evidence="32">
    <location>
        <begin position="577"/>
        <end position="593"/>
    </location>
</feature>
<feature type="helix" evidence="32">
    <location>
        <begin position="596"/>
        <end position="598"/>
    </location>
</feature>
<feature type="strand" evidence="34">
    <location>
        <begin position="601"/>
        <end position="603"/>
    </location>
</feature>
<feature type="helix" evidence="32">
    <location>
        <begin position="604"/>
        <end position="615"/>
    </location>
</feature>
<feature type="strand" evidence="32">
    <location>
        <begin position="617"/>
        <end position="623"/>
    </location>
</feature>
<feature type="helix" evidence="32">
    <location>
        <begin position="632"/>
        <end position="643"/>
    </location>
</feature>
<comment type="function">
    <text evidence="13 15 28">Catalyzes the conversion of 5,10-methylenetetrahydrofolate to 5-methyltetrahydrofolate, a cosubstrate for homocysteine remethylation to methionine (PubMed:29891918). Represents a key regulatory connection between the folate and methionine cycles (Probable).</text>
</comment>
<comment type="catalytic activity">
    <reaction evidence="13 15">
        <text>(6S)-5-methyl-5,6,7,8-tetrahydrofolate + NADP(+) = (6R)-5,10-methylene-5,6,7,8-tetrahydrofolate + NADPH + H(+)</text>
        <dbReference type="Rhea" id="RHEA:19817"/>
        <dbReference type="ChEBI" id="CHEBI:15378"/>
        <dbReference type="ChEBI" id="CHEBI:15636"/>
        <dbReference type="ChEBI" id="CHEBI:18608"/>
        <dbReference type="ChEBI" id="CHEBI:57783"/>
        <dbReference type="ChEBI" id="CHEBI:58349"/>
        <dbReference type="EC" id="1.5.1.53"/>
    </reaction>
    <physiologicalReaction direction="right-to-left" evidence="29">
        <dbReference type="Rhea" id="RHEA:19819"/>
    </physiologicalReaction>
</comment>
<comment type="cofactor">
    <cofactor evidence="12 15">
        <name>FAD</name>
        <dbReference type="ChEBI" id="CHEBI:57692"/>
    </cofactor>
</comment>
<comment type="activity regulation">
    <text evidence="15">Allosterically regulated by S-adenosylmethionine (SAM).</text>
</comment>
<comment type="biophysicochemical properties">
    <kinetics>
        <KM evidence="15">22.4 uM for (6R)-5,10-methylene-5,6,7,8-tetrahydrofolate</KM>
        <KM evidence="15">35.5 uM for NADPH</KM>
        <KM evidence="15">3760 uM for NADH</KM>
        <text evidence="15">kcat is 40.7 sec(-1).</text>
    </kinetics>
</comment>
<comment type="pathway">
    <text evidence="29">One-carbon metabolism; tetrahydrofolate interconversion.</text>
</comment>
<comment type="subunit">
    <text evidence="15">Homodimer.</text>
</comment>
<comment type="interaction">
    <interactant intactId="EBI-372435">
        <id>P42898</id>
    </interactant>
    <interactant intactId="EBI-12828299">
        <id>O60906</id>
        <label>SMPD2</label>
    </interactant>
    <organismsDiffer>false</organismsDiffer>
    <experiments>2</experiments>
</comment>
<comment type="alternative products">
    <event type="alternative splicing"/>
    <isoform>
        <id>P42898-1</id>
        <name>1</name>
        <sequence type="displayed"/>
    </isoform>
    <isoform>
        <id>P42898-2</id>
        <name>2</name>
        <sequence type="described" ref="VSP_053744"/>
    </isoform>
</comment>
<comment type="domain">
    <text evidence="15">Contains a serine-rich phosphorylation region at the N-terminal and an eukaryote-only S-adenosylmethionine (SAM)-binding domain at the C-terminal. Through asymmetric homodimerization, the two regions are positioned next to each other and N-terminal phosphorylation increases sensitivity to SAM binding and inhibition.</text>
</comment>
<comment type="PTM">
    <text evidence="15">Phosphorylation of an N-terminal serine-rich phosphorylation region increases sensitivity to S-adenosylmethionine and inhibition.</text>
</comment>
<comment type="polymorphism">
    <text>Genetic variation in MTHFR influences susceptibility to occlusive vascular disease, neural tube defects (NTD), colon cancer and acute leukemia.</text>
</comment>
<comment type="disease" evidence="5 12 13 14 18 21 25">
    <disease id="DI-01972">
        <name>Homocystinuria due to deficiency of N(5,10)-methylenetetrahydrofolate reductase activity</name>
        <acronym>MTHFRD</acronym>
        <description>An autosomal recessive inborn error of folate metabolism. Clinical severity is variable, ranging from severe neurologic features to absence of symptoms. Clinical features include homocysteinuria, homocysteinemia, developmental delay, severe intellectual disability, perinatal death, psychiatric disturbances, and later-onset neurodegenerative disorders.</description>
        <dbReference type="MIM" id="236250"/>
    </disease>
    <text>The disease is caused by variants affecting the gene represented in this entry.</text>
</comment>
<comment type="disease" evidence="8">
    <disease id="DI-01835">
        <name>Ischemic stroke</name>
        <acronym>ISCHSTR</acronym>
        <description>A stroke is an acute neurologic event leading to death of neural tissue of the brain and resulting in loss of motor, sensory and/or cognitive function. Ischemic strokes, resulting from vascular occlusion, is considered to be a highly complex disease consisting of a group of heterogeneous disorders with multiple genetic and environmental risk factors.</description>
        <dbReference type="MIM" id="601367"/>
    </disease>
    <text>Disease susceptibility is associated with variants affecting the gene represented in this entry.</text>
</comment>
<comment type="disease" evidence="3 16 20">
    <disease id="DI-01623">
        <name>Neural tube defects, folate-sensitive</name>
        <acronym>NTDFS</acronym>
        <description>The most common NTDs are open spina bifida (myelomeningocele) and anencephaly.</description>
        <dbReference type="MIM" id="601634"/>
    </disease>
    <text>Disease susceptibility is associated with variants affecting the gene represented in this entry.</text>
</comment>
<comment type="disease" evidence="9 10">
    <disease id="DI-03626">
        <name>Schizophrenia</name>
        <acronym>SCZD</acronym>
        <description>A complex, multifactorial psychotic disorder or group of disorders characterized by disturbances in the form and content of thought (e.g. delusions, hallucinations), in mood (e.g. inappropriate affect), in sense of self and relationship to the external world (e.g. loss of ego boundaries, withdrawal), and in behavior (e.g bizarre or apparently purposeless behavior). Although it affects emotions, it is distinguished from mood disorders in which such disturbances are primary. Similarly, there may be mild impairment of cognitive function, and it is distinguished from the dementias in which disturbed cognitive function is considered primary. Some patients manifest schizophrenic as well as bipolar disorder symptoms and are often given the diagnosis of schizoaffective disorder.</description>
        <dbReference type="MIM" id="181500"/>
    </disease>
    <text>Disease susceptibility is associated with variants affecting the gene represented in this entry.</text>
</comment>
<comment type="similarity">
    <text evidence="28">Belongs to the methylenetetrahydrofolate reductase family.</text>
</comment>
<comment type="online information" name="Atlas of Genetics and Cytogenetics in Oncology and Haematology">
    <link uri="https://atlasgeneticsoncology.org/gene/41448/MTHFR"/>
</comment>
<comment type="online information" name="Wikipedia">
    <link uri="https://en.wikipedia.org/wiki/Methylenetetrahydrofolate_reductase"/>
    <text>Methylenetetrahydrofolate reductase entry</text>
</comment>
<gene>
    <name evidence="30" type="primary">MTHFR</name>
</gene>
<name>MTHR_HUMAN</name>
<evidence type="ECO:0000250" key="1"/>
<evidence type="ECO:0000256" key="2">
    <source>
        <dbReference type="SAM" id="MobiDB-lite"/>
    </source>
</evidence>
<evidence type="ECO:0000269" key="3">
    <source>
    </source>
</evidence>
<evidence type="ECO:0000269" key="4">
    <source>
    </source>
</evidence>
<evidence type="ECO:0000269" key="5">
    <source>
    </source>
</evidence>
<evidence type="ECO:0000269" key="6">
    <source>
    </source>
</evidence>
<evidence type="ECO:0000269" key="7">
    <source>
    </source>
</evidence>
<evidence type="ECO:0000269" key="8">
    <source>
    </source>
</evidence>
<evidence type="ECO:0000269" key="9">
    <source>
    </source>
</evidence>
<evidence type="ECO:0000269" key="10">
    <source>
    </source>
</evidence>
<evidence type="ECO:0000269" key="11">
    <source>
    </source>
</evidence>
<evidence type="ECO:0000269" key="12">
    <source>
    </source>
</evidence>
<evidence type="ECO:0000269" key="13">
    <source>
    </source>
</evidence>
<evidence type="ECO:0000269" key="14">
    <source>
    </source>
</evidence>
<evidence type="ECO:0000269" key="15">
    <source>
    </source>
</evidence>
<evidence type="ECO:0000269" key="16">
    <source>
    </source>
</evidence>
<evidence type="ECO:0000269" key="17">
    <source>
    </source>
</evidence>
<evidence type="ECO:0000269" key="18">
    <source>
    </source>
</evidence>
<evidence type="ECO:0000269" key="19">
    <source>
    </source>
</evidence>
<evidence type="ECO:0000269" key="20">
    <source>
    </source>
</evidence>
<evidence type="ECO:0000269" key="21">
    <source>
    </source>
</evidence>
<evidence type="ECO:0000269" key="22">
    <source>
    </source>
</evidence>
<evidence type="ECO:0000269" key="23">
    <source>
    </source>
</evidence>
<evidence type="ECO:0000269" key="24">
    <source>
    </source>
</evidence>
<evidence type="ECO:0000269" key="25">
    <source>
    </source>
</evidence>
<evidence type="ECO:0000269" key="26">
    <source ref="5"/>
</evidence>
<evidence type="ECO:0000303" key="27">
    <source>
    </source>
</evidence>
<evidence type="ECO:0000305" key="28"/>
<evidence type="ECO:0000305" key="29">
    <source>
    </source>
</evidence>
<evidence type="ECO:0000312" key="30">
    <source>
        <dbReference type="HGNC" id="HGNC:7436"/>
    </source>
</evidence>
<evidence type="ECO:0007744" key="31">
    <source>
        <dbReference type="PDB" id="6FCX"/>
    </source>
</evidence>
<evidence type="ECO:0007829" key="32">
    <source>
        <dbReference type="PDB" id="6FCX"/>
    </source>
</evidence>
<evidence type="ECO:0007829" key="33">
    <source>
        <dbReference type="PDB" id="8QA4"/>
    </source>
</evidence>
<evidence type="ECO:0007829" key="34">
    <source>
        <dbReference type="PDB" id="8QA6"/>
    </source>
</evidence>
<organism>
    <name type="scientific">Homo sapiens</name>
    <name type="common">Human</name>
    <dbReference type="NCBI Taxonomy" id="9606"/>
    <lineage>
        <taxon>Eukaryota</taxon>
        <taxon>Metazoa</taxon>
        <taxon>Chordata</taxon>
        <taxon>Craniata</taxon>
        <taxon>Vertebrata</taxon>
        <taxon>Euteleostomi</taxon>
        <taxon>Mammalia</taxon>
        <taxon>Eutheria</taxon>
        <taxon>Euarchontoglires</taxon>
        <taxon>Primates</taxon>
        <taxon>Haplorrhini</taxon>
        <taxon>Catarrhini</taxon>
        <taxon>Hominidae</taxon>
        <taxon>Homo</taxon>
    </lineage>
</organism>